<accession>P04275</accession>
<accession>Q8TCE8</accession>
<accession>Q99806</accession>
<sequence>MIPARFAGVLLALALILPGTLCAEGTRGRSSTARCSLFGSDFVNTFDGSMYSFAGYCSYLLAGGCQKRSFSIIGDFQNGKRVSLSVYLGEFFDIHLFVNGTVTQGDQRVSMPYASKGLYLETEAGYYKLSGEAYGFVARIDGSGNFQVLLSDRYFNKTCGLCGNFNIFAEDDFMTQEGTLTSDPYDFANSWALSSGEQWCERASPPSSSCNISSGEMQKGLWEQCQLLKSTSVFARCHPLVDPEPFVALCEKTLCECAGGLECACPALLEYARTCAQEGMVLYGWTDHSACSPVCPAGMEYRQCVSPCARTCQSLHINEMCQERCVDGCSCPEGQLLDEGLCVESTECPCVHSGKRYPPGTSLSRDCNTCICRNSQWICSNEECPGECLVTGQSHFKSFDNRYFTFSGICQYLLARDCQDHSFSIVIETVQCADDRDAVCTRSVTVRLPGLHNSLVKLKHGAGVAMDGQDVQLPLLKGDLRIQHTVTASVRLSYGEDLQMDWDGRGRLLVKLSPVYAGKTCGLCGNYNGNQGDDFLTPSGLAEPRVEDFGNAWKLHGDCQDLQKQHSDPCALNPRMTRFSEEACAVLTSPTFEACHRAVSPLPYLRNCRYDVCSCSDGRECLCGALASYAAACAGRGVRVAWREPGRCELNCPKGQVYLQCGTPCNLTCRSLSYPDEECNEACLEGCFCPPGLYMDERGDCVPKAQCPCYYDGEIFQPEDIFSDHHTMCYCEDGFMHCTMSGVPGSLLPDAVLSSPLSHRSKRSLSCRPPMVKLVCPADNLRAEGLECTKTCQNYDLECMSMGCVSGCLCPPGMVRHENRCVALERCPCFHQGKEYAPGETVKIGCNTCVCQDRKWNCTDHVCDATCSTIGMAHYLTFDGLKYLFPGECQYVLVQDYCGSNPGTFRILVGNKGCSHPSVKCKKRVTILVEGGEIELFDGEVNVKRPMKDETHFEVVESGRYIILLLGKALSVVWDRHLSISVVLKQTYQEKVCGLCGNFDGIQNNDLTSSNLQVEEDPVDFGNSWKVSSQCADTRKVPLDSSPATCHNNIMKQTMVDSSCRILTSDVFQDCNKLVDPEPYLDVCIYDTCSCESIGDCACFCDTIAAYAHVCAQHGKVVTWRTATLCPQSCEERNLRENGYECEWRYNSCAPACQVTCQHPEPLACPVQCVEGCHAHCPPGKILDELLQTCVDPEDCPVCEVAGRRFASGKKVTLNPSDPEHCQICHCDVVNLTCEACQEPGGLVVPPTDAPVSPTTLYVEDISEPPLHDFYCSRLLDLVFLLDGSSRLSEAEFEVLKAFVVDMMERLRISQKWVRVAVVEYHDGSHAYIGLKDRKRPSELRRIASQVKYAGSQVASTSEVLKYTLFQIFSKIDRPEASRITLLLMASQEPQRMSRNFVRYVQGLKKKKVIVIPVGIGPHANLKQIRLIEKQAPENKAFVLSSVDELEQQRDEIVSYLCDLAPEAPPPTLPPDMAQVTVGPGLLGVSTLGPKRNSMVLDVAFVLEGSDKIGEADFNRSKEFMEEVIQRMDVGQDSIHVTVLQYSYMVTVEYPFSEAQSKGDILQRVREIRYQGGNRTNTGLALRYLSDHSFLVSQGDREQAPNLVYMVTGNPASDEIKRLPGDIQVVPIGVGPNANVQELERIGWPNAPILIQDFETLPREAPDLVLQRCCSGEGLQIPTLSPAPDCSQPLDVILLLDGSSSFPASYFDEMKSFAKAFISKANIGPRLTQVSVLQYGSITTIDVPWNVVPEKAHLLSLVDVMQREGGPSQIGDALGFAVRYLTSEMHGARPGASKAVVILVTDVSVDSVDAAADAARSNRVTVFPIGIGDRYDAAQLRILAGPAGDSNVVKLQRIEDLPTMVTLGNSFLHKLCSGFVRICMDEDGNEKRPGDVWTLPDQCHTVTCQPDGQTLLKSHRVNCDRGLRPSCPNSQSPVKVEETCGCRWTCPCVCTGSSTRHIVTFDGQNFKLTGSCSYVLFQNKEQDLEVILHNGACSPGARQGCMKSIEVKHSALSVELHSDMEVTVNGRLVSVPYVGGNMEVNVYGAIMHEVRFNHLGHIFTFTPQNNEFQLQLSPKTFASKTYGLCGICDENGANDFMLRDGTVTTDWKTLVQEWTVQRPGQTCQPILEEQCLVPDSSHCQVLLLPLFAECHKVLAPATFYAICQQDSCHQEQVCEVIASYAHLCRTNGVCVDWRTPDFCAMSCPPSLVYNHCEHGCPRHCDGNVSSCGDHPSEGCFCPPDKVMLEGSCVPEEACTQCIGEDGVQHQFLEAWVPDHQPCQICTCLSGRKVNCTTQPCPTAKAPTCGLCEVARLRQNADQCCPEYECVCDPVSCDLPPVPHCERGLQPTLTNPGECRPNFTCACRKEECKRVSPPSCPPHRLPTLRKTQCCDEYECACNCVNSTVSCPLGYLASTATNDCGCTTTTCLPDKVCVHRSTIYPVGQFWEEGCDVCTCTDMEDAVMGLRVAQCSQKPCEDSCRSGFTYVLHEGECCGRCLPSACEVVTGSPRGDSQSSWKSVGSQWASPENPCLINECVRVKEEVFIQQRNVSCPQLEVPVCPSGFQLSCKTSACCPSCRCERMEACMLNGTVIGPGKTVMIDVCTTCRCMVQVGVISGFKLECRKTTCNPCPLGYKEENNTGECCGRCLPTACTIQLRGGQIMTLKRDETLQDGCDTHFCKVNERGEYFWEKRVTGCPPFDEHKCLAEGGKIMKIPGTCCDTCEEPECNDITARLQYVKVGSCKSEVEVDIHYCQGKCASKAMYSIDINDVQDQCSCCSPTRTEPMQVALHCTNGSVVYHEVLNAMECKCSPRKCSK</sequence>
<reference key="1">
    <citation type="journal article" date="1986" name="Nucleic Acids Res.">
        <title>Nucleotide sequence of pre-pro-von Willebrand factor cDNA.</title>
        <authorList>
            <person name="Bonthron D."/>
            <person name="Orr E.C."/>
            <person name="Mitsock L.M."/>
            <person name="Ginsburg D."/>
            <person name="Handin R.I."/>
            <person name="Orkin S.H."/>
        </authorList>
    </citation>
    <scope>NUCLEOTIDE SEQUENCE [MRNA] (ISOFORM 1)</scope>
    <scope>VARIANTS ARG-852; ALA-1381 AND HIS-1472</scope>
</reference>
<reference key="2">
    <citation type="journal article" date="1989" name="J. Biol. Chem.">
        <title>Structure of the gene for human von Willebrand factor.</title>
        <authorList>
            <person name="Mancuso D.J."/>
            <person name="Tuley E.A."/>
            <person name="Westfield L.A."/>
            <person name="Worrall N.K."/>
            <person name="Shelton-Inloes B.B."/>
            <person name="Sorace J.M."/>
            <person name="Alevy Y.G."/>
            <person name="Sadler J.E."/>
        </authorList>
    </citation>
    <scope>NUCLEOTIDE SEQUENCE [GENOMIC DNA]</scope>
    <scope>VARIANTS ILE-471; ARG-852; ALA-1381 AND HIS-1472</scope>
</reference>
<reference key="3">
    <citation type="journal article" date="2006" name="Nature">
        <title>The finished DNA sequence of human chromosome 12.</title>
        <authorList>
            <person name="Scherer S.E."/>
            <person name="Muzny D.M."/>
            <person name="Buhay C.J."/>
            <person name="Chen R."/>
            <person name="Cree A."/>
            <person name="Ding Y."/>
            <person name="Dugan-Rocha S."/>
            <person name="Gill R."/>
            <person name="Gunaratne P."/>
            <person name="Harris R.A."/>
            <person name="Hawes A.C."/>
            <person name="Hernandez J."/>
            <person name="Hodgson A.V."/>
            <person name="Hume J."/>
            <person name="Jackson A."/>
            <person name="Khan Z.M."/>
            <person name="Kovar-Smith C."/>
            <person name="Lewis L.R."/>
            <person name="Lozado R.J."/>
            <person name="Metzker M.L."/>
            <person name="Milosavljevic A."/>
            <person name="Miner G.R."/>
            <person name="Montgomery K.T."/>
            <person name="Morgan M.B."/>
            <person name="Nazareth L.V."/>
            <person name="Scott G."/>
            <person name="Sodergren E."/>
            <person name="Song X.-Z."/>
            <person name="Steffen D."/>
            <person name="Lovering R.C."/>
            <person name="Wheeler D.A."/>
            <person name="Worley K.C."/>
            <person name="Yuan Y."/>
            <person name="Zhang Z."/>
            <person name="Adams C.Q."/>
            <person name="Ansari-Lari M.A."/>
            <person name="Ayele M."/>
            <person name="Brown M.J."/>
            <person name="Chen G."/>
            <person name="Chen Z."/>
            <person name="Clerc-Blankenburg K.P."/>
            <person name="Davis C."/>
            <person name="Delgado O."/>
            <person name="Dinh H.H."/>
            <person name="Draper H."/>
            <person name="Gonzalez-Garay M.L."/>
            <person name="Havlak P."/>
            <person name="Jackson L.R."/>
            <person name="Jacob L.S."/>
            <person name="Kelly S.H."/>
            <person name="Li L."/>
            <person name="Li Z."/>
            <person name="Liu J."/>
            <person name="Liu W."/>
            <person name="Lu J."/>
            <person name="Maheshwari M."/>
            <person name="Nguyen B.-V."/>
            <person name="Okwuonu G.O."/>
            <person name="Pasternak S."/>
            <person name="Perez L.M."/>
            <person name="Plopper F.J.H."/>
            <person name="Santibanez J."/>
            <person name="Shen H."/>
            <person name="Tabor P.E."/>
            <person name="Verduzco D."/>
            <person name="Waldron L."/>
            <person name="Wang Q."/>
            <person name="Williams G.A."/>
            <person name="Zhang J."/>
            <person name="Zhou J."/>
            <person name="Allen C.C."/>
            <person name="Amin A.G."/>
            <person name="Anyalebechi V."/>
            <person name="Bailey M."/>
            <person name="Barbaria J.A."/>
            <person name="Bimage K.E."/>
            <person name="Bryant N.P."/>
            <person name="Burch P.E."/>
            <person name="Burkett C.E."/>
            <person name="Burrell K.L."/>
            <person name="Calderon E."/>
            <person name="Cardenas V."/>
            <person name="Carter K."/>
            <person name="Casias K."/>
            <person name="Cavazos I."/>
            <person name="Cavazos S.R."/>
            <person name="Ceasar H."/>
            <person name="Chacko J."/>
            <person name="Chan S.N."/>
            <person name="Chavez D."/>
            <person name="Christopoulos C."/>
            <person name="Chu J."/>
            <person name="Cockrell R."/>
            <person name="Cox C.D."/>
            <person name="Dang M."/>
            <person name="Dathorne S.R."/>
            <person name="David R."/>
            <person name="Davis C.M."/>
            <person name="Davy-Carroll L."/>
            <person name="Deshazo D.R."/>
            <person name="Donlin J.E."/>
            <person name="D'Souza L."/>
            <person name="Eaves K.A."/>
            <person name="Egan A."/>
            <person name="Emery-Cohen A.J."/>
            <person name="Escotto M."/>
            <person name="Flagg N."/>
            <person name="Forbes L.D."/>
            <person name="Gabisi A.M."/>
            <person name="Garza M."/>
            <person name="Hamilton C."/>
            <person name="Henderson N."/>
            <person name="Hernandez O."/>
            <person name="Hines S."/>
            <person name="Hogues M.E."/>
            <person name="Huang M."/>
            <person name="Idlebird D.G."/>
            <person name="Johnson R."/>
            <person name="Jolivet A."/>
            <person name="Jones S."/>
            <person name="Kagan R."/>
            <person name="King L.M."/>
            <person name="Leal B."/>
            <person name="Lebow H."/>
            <person name="Lee S."/>
            <person name="LeVan J.M."/>
            <person name="Lewis L.C."/>
            <person name="London P."/>
            <person name="Lorensuhewa L.M."/>
            <person name="Loulseged H."/>
            <person name="Lovett D.A."/>
            <person name="Lucier A."/>
            <person name="Lucier R.L."/>
            <person name="Ma J."/>
            <person name="Madu R.C."/>
            <person name="Mapua P."/>
            <person name="Martindale A.D."/>
            <person name="Martinez E."/>
            <person name="Massey E."/>
            <person name="Mawhiney S."/>
            <person name="Meador M.G."/>
            <person name="Mendez S."/>
            <person name="Mercado C."/>
            <person name="Mercado I.C."/>
            <person name="Merritt C.E."/>
            <person name="Miner Z.L."/>
            <person name="Minja E."/>
            <person name="Mitchell T."/>
            <person name="Mohabbat F."/>
            <person name="Mohabbat K."/>
            <person name="Montgomery B."/>
            <person name="Moore N."/>
            <person name="Morris S."/>
            <person name="Munidasa M."/>
            <person name="Ngo R.N."/>
            <person name="Nguyen N.B."/>
            <person name="Nickerson E."/>
            <person name="Nwaokelemeh O.O."/>
            <person name="Nwokenkwo S."/>
            <person name="Obregon M."/>
            <person name="Oguh M."/>
            <person name="Oragunye N."/>
            <person name="Oviedo R.J."/>
            <person name="Parish B.J."/>
            <person name="Parker D.N."/>
            <person name="Parrish J."/>
            <person name="Parks K.L."/>
            <person name="Paul H.A."/>
            <person name="Payton B.A."/>
            <person name="Perez A."/>
            <person name="Perrin W."/>
            <person name="Pickens A."/>
            <person name="Primus E.L."/>
            <person name="Pu L.-L."/>
            <person name="Puazo M."/>
            <person name="Quiles M.M."/>
            <person name="Quiroz J.B."/>
            <person name="Rabata D."/>
            <person name="Reeves K."/>
            <person name="Ruiz S.J."/>
            <person name="Shao H."/>
            <person name="Sisson I."/>
            <person name="Sonaike T."/>
            <person name="Sorelle R.P."/>
            <person name="Sutton A.E."/>
            <person name="Svatek A.F."/>
            <person name="Svetz L.A."/>
            <person name="Tamerisa K.S."/>
            <person name="Taylor T.R."/>
            <person name="Teague B."/>
            <person name="Thomas N."/>
            <person name="Thorn R.D."/>
            <person name="Trejos Z.Y."/>
            <person name="Trevino B.K."/>
            <person name="Ukegbu O.N."/>
            <person name="Urban J.B."/>
            <person name="Vasquez L.I."/>
            <person name="Vera V.A."/>
            <person name="Villasana D.M."/>
            <person name="Wang L."/>
            <person name="Ward-Moore S."/>
            <person name="Warren J.T."/>
            <person name="Wei X."/>
            <person name="White F."/>
            <person name="Williamson A.L."/>
            <person name="Wleczyk R."/>
            <person name="Wooden H.S."/>
            <person name="Wooden S.H."/>
            <person name="Yen J."/>
            <person name="Yoon L."/>
            <person name="Yoon V."/>
            <person name="Zorrilla S.E."/>
            <person name="Nelson D."/>
            <person name="Kucherlapati R."/>
            <person name="Weinstock G."/>
            <person name="Gibbs R.A."/>
        </authorList>
    </citation>
    <scope>NUCLEOTIDE SEQUENCE [LARGE SCALE GENOMIC DNA]</scope>
</reference>
<reference key="4">
    <citation type="submission" date="2005-09" db="EMBL/GenBank/DDBJ databases">
        <authorList>
            <person name="Mural R.J."/>
            <person name="Istrail S."/>
            <person name="Sutton G."/>
            <person name="Florea L."/>
            <person name="Halpern A.L."/>
            <person name="Mobarry C.M."/>
            <person name="Lippert R."/>
            <person name="Walenz B."/>
            <person name="Shatkay H."/>
            <person name="Dew I."/>
            <person name="Miller J.R."/>
            <person name="Flanigan M.J."/>
            <person name="Edwards N.J."/>
            <person name="Bolanos R."/>
            <person name="Fasulo D."/>
            <person name="Halldorsson B.V."/>
            <person name="Hannenhalli S."/>
            <person name="Turner R."/>
            <person name="Yooseph S."/>
            <person name="Lu F."/>
            <person name="Nusskern D.R."/>
            <person name="Shue B.C."/>
            <person name="Zheng X.H."/>
            <person name="Zhong F."/>
            <person name="Delcher A.L."/>
            <person name="Huson D.H."/>
            <person name="Kravitz S.A."/>
            <person name="Mouchard L."/>
            <person name="Reinert K."/>
            <person name="Remington K.A."/>
            <person name="Clark A.G."/>
            <person name="Waterman M.S."/>
            <person name="Eichler E.E."/>
            <person name="Adams M.D."/>
            <person name="Hunkapiller M.W."/>
            <person name="Myers E.W."/>
            <person name="Venter J.C."/>
        </authorList>
    </citation>
    <scope>NUCLEOTIDE SEQUENCE [LARGE SCALE GENOMIC DNA]</scope>
</reference>
<reference key="5">
    <citation type="journal article" date="2004" name="Genome Res.">
        <title>The status, quality, and expansion of the NIH full-length cDNA project: the Mammalian Gene Collection (MGC).</title>
        <authorList>
            <consortium name="The MGC Project Team"/>
        </authorList>
    </citation>
    <scope>NUCLEOTIDE SEQUENCE [LARGE SCALE MRNA] (ISOFORM 2)</scope>
    <source>
        <tissue>Lung</tissue>
    </source>
</reference>
<reference key="6">
    <citation type="journal article" date="1986" name="EMBO J.">
        <title>Full-length von Willebrand factor (vWF) cDNA encodes a highly repetitive protein considerably larger than the mature vWF subunit.</title>
        <authorList>
            <person name="Verweij C.L."/>
            <person name="Diergaarde P.J."/>
            <person name="Hart M."/>
            <person name="Pannekoek H."/>
        </authorList>
    </citation>
    <scope>NUCLEOTIDE SEQUENCE [MRNA] OF 1-1400 (ISOFORM 1)</scope>
    <scope>VARIANTS ARG-484; ARG-852 AND ALA-1381</scope>
</reference>
<reference key="7">
    <citation type="journal article" date="1986" name="EMBO J.">
        <authorList>
            <person name="Verweij C.L."/>
            <person name="Diergaarde P.J."/>
            <person name="Hart M."/>
            <person name="Pannekoek H."/>
        </authorList>
    </citation>
    <scope>ERRATUM OF PUBMED:3019665</scope>
</reference>
<reference key="8">
    <citation type="journal article" date="1988" name="Eur. J. Biochem.">
        <title>The human von Willebrand factor gene. Structure of the 5' region.</title>
        <authorList>
            <person name="Bonthron D."/>
            <person name="Orkin S.H."/>
        </authorList>
    </citation>
    <scope>NUCLEOTIDE SEQUENCE [GENOMIC DNA] OF 1-178</scope>
</reference>
<reference key="9">
    <citation type="journal article" date="1987" name="Biochem. Biophys. Res. Commun.">
        <title>Evolution of human von Willebrand factor: cDNA sequence polymorphisms, repeated domains, and relationship to von Willebrand antigen II.</title>
        <authorList>
            <person name="Shelton-Inloes B.B."/>
            <person name="Broze G.J. Jr."/>
            <person name="Miletich J.P."/>
            <person name="Sadler J.E."/>
        </authorList>
    </citation>
    <scope>NUCLEOTIDE SEQUENCE [MRNA] OF 1-120 (ISOFORM 1)</scope>
    <scope>PROTEIN SEQUENCE OF 23-56</scope>
    <source>
        <tissue>Umbilical vein endothelial cell</tissue>
    </source>
</reference>
<reference key="10">
    <citation type="journal article" date="1986" name="Biochemistry">
        <title>Amino acid sequence of human von Willebrand factor.</title>
        <authorList>
            <person name="Titani K."/>
            <person name="Kumar S."/>
            <person name="Takio K."/>
            <person name="Ericsson L.H."/>
            <person name="Wade R.D."/>
            <person name="Ashida K."/>
            <person name="Walsh K.A."/>
            <person name="Chopek M.W."/>
            <person name="Sadler J.E."/>
            <person name="Fujikawa K."/>
        </authorList>
    </citation>
    <scope>PROTEIN SEQUENCE OF 764-2813</scope>
    <scope>VARIANTS ARG-852 AND ALA-1381</scope>
</reference>
<reference key="11">
    <citation type="journal article" date="1985" name="Proc. Natl. Acad. Sci. U.S.A.">
        <title>Cloning and characterization of two cDNAs coding for human von Willebrand factor.</title>
        <authorList>
            <person name="Sadler J.E."/>
            <person name="Shelton-Inloes B.B."/>
            <person name="Sorace J.M."/>
            <person name="Harlan J.M."/>
            <person name="Titani K."/>
            <person name="Davie E.W."/>
        </authorList>
    </citation>
    <scope>NUCLEOTIDE SEQUENCE [MRNA] OF 744-873 AND 1289-2813 (ISOFORM 1)</scope>
    <scope>VARIANTS ALA-789; ARG-852 AND ALA-1381</scope>
</reference>
<reference key="12">
    <citation type="journal article" date="2003" name="Nat. Biotechnol.">
        <title>Exploring proteomes and analyzing protein processing by mass spectrometric identification of sorted N-terminal peptides.</title>
        <authorList>
            <person name="Gevaert K."/>
            <person name="Goethals M."/>
            <person name="Martens L."/>
            <person name="Van Damme J."/>
            <person name="Staes A."/>
            <person name="Thomas G.R."/>
            <person name="Vandekerckhove J."/>
        </authorList>
    </citation>
    <scope>PROTEIN SEQUENCE OF 764-782</scope>
    <source>
        <tissue>Platelet</tissue>
    </source>
</reference>
<reference key="13">
    <citation type="journal article" date="1986" name="Biochemistry">
        <title>cDNA sequences for human von Willebrand factor reveal five types of repeated domains and five possible protein sequence polymorphisms.</title>
        <authorList>
            <person name="Shelton-Inloes B.B."/>
            <person name="Titani K."/>
            <person name="Sadler J.E."/>
        </authorList>
    </citation>
    <scope>NUCLEOTIDE SEQUENCE [MRNA] OF 781-1424 (ISOFORM 1)</scope>
    <scope>VARIANTS ARG-852 AND ALA-1381</scope>
</reference>
<reference key="14">
    <citation type="journal article" date="1991" name="Biochemistry">
        <title>Human von Willebrand factor gene and pseudogene: structural analysis and differentiation by polymerase chain reaction.</title>
        <authorList>
            <person name="Mancuso D.J."/>
            <person name="Tuley E.A."/>
            <person name="Westfield L.A."/>
            <person name="Lester-Mancuso T.L."/>
            <person name="Le Beau M.M."/>
            <person name="Sorace J.M."/>
            <person name="Sadler J.E."/>
        </authorList>
    </citation>
    <scope>NUCLEOTIDE SEQUENCE [GENOMIC DNA] OF 990-1947</scope>
    <scope>VARIANTS ALA-1381 AND HIS-1472</scope>
</reference>
<reference key="15">
    <citation type="journal article" date="1997" name="Blood">
        <title>Activation of human platelets by the membrane-expressed A1 domain of von Willebrand factor.</title>
        <authorList>
            <person name="Schulte am Esch J. II"/>
            <person name="Cruz M.A."/>
            <person name="Siegel J.B."/>
            <person name="Anrather J."/>
            <person name="Robson S.C."/>
        </authorList>
    </citation>
    <scope>NUCLEOTIDE SEQUENCE [MRNA] OF 1236-1476 (ISOFORM 1)</scope>
    <scope>VARIANT ALA-1381</scope>
</reference>
<reference key="16">
    <citation type="journal article" date="1985" name="Science">
        <title>Human von Willebrand factor (vWF): isolation of complementary DNA (cDNA) clones and chromosomal localization.</title>
        <authorList>
            <person name="Ginsburg D."/>
            <person name="Handin R.I."/>
            <person name="Bonthron D.T."/>
            <person name="Donlon T.A."/>
            <person name="Bruns G.A.P."/>
            <person name="Latt S.A."/>
            <person name="Orkin S.H."/>
        </authorList>
    </citation>
    <scope>NUCLEOTIDE SEQUENCE [MRNA] OF 2621-2813 (ISOFORM 1)</scope>
</reference>
<reference key="17">
    <citation type="journal article" date="1985" name="Cell">
        <title>Molecular cloning of cDNA for human von Willebrand factor: authentication by a new method.</title>
        <authorList>
            <person name="Lynch D.C."/>
            <person name="Zimmerman T.S."/>
            <person name="Collins C.J."/>
            <person name="Brown M."/>
            <person name="Morin M.J."/>
            <person name="Ling E.H."/>
            <person name="Livingston D.M."/>
        </authorList>
    </citation>
    <scope>NUCLEOTIDE SEQUENCE [MRNA] OF 2731-2813 (ISOFORM 1)</scope>
</reference>
<reference key="18">
    <citation type="submission" date="1991-07" db="EMBL/GenBank/DDBJ databases">
        <authorList>
            <person name="Lynch D.C."/>
        </authorList>
    </citation>
    <scope>SEQUENCE REVISION</scope>
</reference>
<reference key="19">
    <citation type="journal article" date="1985" name="Nucleic Acids Res.">
        <title>Construction of cDNA coding for human von Willebrand factor using antibody probes for colony-screening and mapping of the chromosomal gene.</title>
        <authorList>
            <person name="Verweij C.L."/>
            <person name="de Vries C.J.M."/>
            <person name="Distel B."/>
            <person name="van Zonneveld A.-J."/>
            <person name="Geurts van Kessel A."/>
            <person name="van Mourik J.A."/>
            <person name="Pannekoek H."/>
        </authorList>
    </citation>
    <scope>NUCLEOTIDE SEQUENCE [MRNA] OF 2731-2813 (ISOFORM 1)</scope>
</reference>
<reference key="20">
    <citation type="journal article" date="1987" name="Proc. Natl. Acad. Sci. U.S.A.">
        <title>Molecular cloning of the human gene for von Willebrand factor and identification of the transcription initiation site.</title>
        <authorList>
            <person name="Collins C.J."/>
            <person name="Underdahl J.P."/>
            <person name="Levene R.B."/>
            <person name="Ravera C.P."/>
            <person name="Morin M.J."/>
            <person name="Dombalagian M.J."/>
            <person name="Ricca G."/>
            <person name="Livingston D.M."/>
            <person name="Lynch D.C."/>
        </authorList>
    </citation>
    <scope>NUCLEOTIDE SEQUENCE [GENOMIC DNA] OF 2731-2813</scope>
</reference>
<reference key="21">
    <citation type="journal article" date="2000" name="Blood">
        <title>von Willebrand factor storage and multimerization: 2 independent intracellular processes.</title>
        <authorList>
            <person name="Haberichter S.L."/>
            <person name="Fahs S.A."/>
            <person name="Montgomery R.R."/>
        </authorList>
    </citation>
    <scope>SUBUNIT</scope>
    <scope>SUBCELLULAR LOCATION</scope>
</reference>
<reference key="22">
    <citation type="journal article" date="1987" name="Biochemistry">
        <title>Identification of disulfide-bridged substructures within human von Willebrand factor.</title>
        <authorList>
            <person name="Marti T."/>
            <person name="Rosselet S.J."/>
            <person name="Titani K."/>
            <person name="Walsh K.A."/>
        </authorList>
    </citation>
    <scope>DISULFIDE BONDS</scope>
</reference>
<reference key="23">
    <citation type="journal article" date="1986" name="Eur. J. Biochem.">
        <title>Primary structure of a new tetraantennary glycan of the N-acetyllactosaminic type isolated from human factor VIII/von Willebrand factor.</title>
        <authorList>
            <person name="Samor B."/>
            <person name="Michalski J.C."/>
            <person name="Debray H."/>
            <person name="Mazurier C."/>
            <person name="Goudemand M."/>
            <person name="van Halbeek H."/>
            <person name="Vliegenthart J.F.G."/>
            <person name="Montreuil J."/>
        </authorList>
    </citation>
    <scope>STRUCTURE OF CARBOHYDRATES</scope>
</reference>
<reference key="24">
    <citation type="journal article" date="1997" name="J. Biol. Chem.">
        <title>The acidic region of the factor VIII light chain and the C2 domain together form the high affinity binding site for von Willebrand factor.</title>
        <authorList>
            <person name="Saenko E.L."/>
            <person name="Scandella D."/>
        </authorList>
    </citation>
    <scope>INTERACTION WITH F8</scope>
</reference>
<reference key="25">
    <citation type="journal article" date="2004" name="Proteomics">
        <title>Screening for N-glycosylated proteins by liquid chromatography mass spectrometry.</title>
        <authorList>
            <person name="Bunkenborg J."/>
            <person name="Pilch B.J."/>
            <person name="Podtelejnikov A.V."/>
            <person name="Wisniewski J.R."/>
        </authorList>
    </citation>
    <scope>GLYCOSYLATION [LARGE SCALE ANALYSIS] AT ASN-1515</scope>
    <source>
        <tissue>Plasma</tissue>
    </source>
</reference>
<reference key="26">
    <citation type="journal article" date="2009" name="J. Proteome Res.">
        <title>Glycoproteomics analysis of human liver tissue by combination of multiple enzyme digestion and hydrazide chemistry.</title>
        <authorList>
            <person name="Chen R."/>
            <person name="Jiang X."/>
            <person name="Sun D."/>
            <person name="Han G."/>
            <person name="Wang F."/>
            <person name="Ye M."/>
            <person name="Wang L."/>
            <person name="Zou H."/>
        </authorList>
    </citation>
    <scope>GLYCOSYLATION [LARGE SCALE ANALYSIS] AT ASN-2546</scope>
    <source>
        <tissue>Liver</tissue>
    </source>
</reference>
<reference key="27">
    <citation type="journal article" date="2009" name="Mol. Cell. Proteomics">
        <title>A strategy for precise and large scale identification of core fucosylated glycoproteins.</title>
        <authorList>
            <person name="Jia W."/>
            <person name="Lu Z."/>
            <person name="Fu Y."/>
            <person name="Wang H.P."/>
            <person name="Wang L.H."/>
            <person name="Chi H."/>
            <person name="Yuan Z.F."/>
            <person name="Zheng Z.B."/>
            <person name="Song L.N."/>
            <person name="Han H.H."/>
            <person name="Liang Y.M."/>
            <person name="Wang J.L."/>
            <person name="Cai Y."/>
            <person name="Zhang Y.K."/>
            <person name="Deng Y.L."/>
            <person name="Ying W.T."/>
            <person name="He S.M."/>
            <person name="Qian X.H."/>
        </authorList>
    </citation>
    <scope>GLYCOSYLATION AT ASN-1515</scope>
</reference>
<reference key="28">
    <citation type="journal article" date="1998" name="J. Biol. Chem.">
        <title>Crystal structure of the von Willebrand factor A1 domain and implications for the binding of platelet glycoprotein Ib.</title>
        <authorList>
            <person name="Emsley J."/>
            <person name="Cruz M."/>
            <person name="Handin R."/>
            <person name="Liddington R."/>
        </authorList>
    </citation>
    <scope>X-RAY CRYSTALLOGRAPHY (2.3 ANGSTROMS) OF 1261-1468</scope>
</reference>
<reference key="29">
    <citation type="journal article" date="1997" name="Structure">
        <title>Crystal structure of the A3 domain of human von Willebrand factor: implications for collagen binding.</title>
        <authorList>
            <person name="Huizinga E.G."/>
            <person name="Martijn van der Plas R."/>
            <person name="Kroon J."/>
            <person name="Sixma J.J."/>
            <person name="Gros P."/>
        </authorList>
    </citation>
    <scope>X-RAY CRYSTALLOGRAPHY (1.8 ANGSTROMS) OF 1685-1873</scope>
</reference>
<reference key="30">
    <citation type="journal article" date="1997" name="J. Biol. Chem.">
        <title>The von Willebrand factor A3 domain does not contain a metal ion-dependent adhesion site motif.</title>
        <authorList>
            <person name="Bienkowska J."/>
            <person name="Cruz M."/>
            <person name="Atiemo A."/>
            <person name="Handin R."/>
            <person name="Liddington R."/>
        </authorList>
    </citation>
    <scope>X-RAY CRYSTALLOGRAPHY (2.2 ANGSTROMS) OF 1686-1872</scope>
</reference>
<reference key="31">
    <citation type="journal article" date="2003" name="J. Thromb. Haemost.">
        <title>von Willebrand factor, platelets and endothelial cell interactions.</title>
        <authorList>
            <person name="Ruggeri Z.M."/>
        </authorList>
    </citation>
    <scope>REVIEW</scope>
</reference>
<reference key="32">
    <citation type="journal article" date="1989" name="Proc. Natl. Acad. Sci. U.S.A.">
        <title>Molecular basis of human von Willebrand disease: analysis of platelet von Willebrand factor mRNA.</title>
        <authorList>
            <person name="Ginsburg D."/>
            <person name="Konkle B.A."/>
            <person name="Gill J.C."/>
            <person name="Montgomery R.R."/>
            <person name="Bockenstedt P.L."/>
            <person name="Johnson T.A."/>
            <person name="Yang A.Y."/>
        </authorList>
    </citation>
    <scope>VARIANTS VWD2 TRP-1597 AND ASP-1607</scope>
</reference>
<reference key="33">
    <citation type="journal article" date="1991" name="Am. J. Hum. Genet.">
        <title>Analysis of the relationship of von Willebrand disease (vWD) and hereditary hemorrhagic telangiectasia and identification of a potential type IIA vWD mutation (IIe865 to Thr).</title>
        <authorList>
            <person name="Iannuzzi M.C."/>
            <person name="Hidaka N."/>
            <person name="Boehnke M."/>
            <person name="Bruck M.E."/>
            <person name="Hanna W.T."/>
            <person name="Collins F.S."/>
            <person name="Ginsburg D."/>
        </authorList>
    </citation>
    <scope>VARIANT VWD2 THR-1628</scope>
</reference>
<reference key="34">
    <citation type="journal article" date="1991" name="Br. J. Haematol.">
        <title>Identification of two point mutations in the von Willebrand factor gene of three families with the 'Normandy' variant of von Willebrand disease.</title>
        <authorList>
            <person name="Gaucher C."/>
            <person name="Mercier B."/>
            <person name="Jorieux S."/>
            <person name="Oufkir D."/>
            <person name="Mazurier C."/>
        </authorList>
    </citation>
    <scope>VARIANTS VWD2 TRP-816 AND GLN-854</scope>
</reference>
<reference key="35">
    <citation type="journal article" date="1991" name="Eur. J. Haematol.">
        <title>An Arg545--&gt;Cys545 substitution mutation of the von Willebrand factor in type IIB von Willebrand's disease.</title>
        <authorList>
            <person name="Donner M."/>
            <person name="Andersson A.-M."/>
            <person name="Kristoffersson A.-C."/>
            <person name="Nilsson I.M."/>
            <person name="Dahlback B."/>
            <person name="Holmberg L."/>
        </authorList>
    </citation>
    <scope>VARIANT VWD2 CYS-1308</scope>
</reference>
<reference key="36">
    <citation type="journal article" date="1991" name="J. Clin. Invest.">
        <title>Molecular basis of von Willebrand disease type IIB. Candidate mutations cluster in one disulfide loop between proposed platelet glycoprotein Ib binding sequences.</title>
        <authorList>
            <person name="Randi A.M."/>
            <person name="Rabinowitz I."/>
            <person name="Mancuso D.J."/>
            <person name="Mannucci P.M."/>
            <person name="Sadler J.E."/>
        </authorList>
    </citation>
    <scope>VARIANTS VWD2 TRP-1306; CYS-1308 AND PRO-1613</scope>
</reference>
<reference key="37">
    <citation type="journal article" date="1991" name="J. Clin. Invest.">
        <title>The molecular defect in type IIB von Willebrand disease. Identification of four potential missense mutations within the putative GpIb binding domain.</title>
        <authorList>
            <person name="Cooney K.A."/>
            <person name="Nichols W.C."/>
            <person name="Bruck M.E."/>
            <person name="Bahou W.F."/>
            <person name="Shapiro A.D."/>
            <person name="Bowie E.J.W."/>
            <person name="Gralnick H.R."/>
            <person name="Ginsburg D."/>
        </authorList>
    </citation>
    <scope>VARIANTS VWD2 TRP-1306; CYS-1308; MET-1316 AND GLN-1341</scope>
    <scope>VARIANT HIS-1399</scope>
</reference>
<reference key="38">
    <citation type="journal article" date="1991" name="Proc. Natl. Acad. Sci. U.S.A.">
        <title>Identification of a point mutation in type IIB von Willebrand disease illustrating the regulation of von Willebrand factor affinity for the platelet membrane glycoprotein Ib-IX receptor.</title>
        <authorList>
            <person name="Ware J."/>
            <person name="Dent J.A."/>
            <person name="Azuma H."/>
            <person name="Sugimoto M."/>
            <person name="Kyrle P.A."/>
            <person name="Yoshioka A."/>
            <person name="Ruggeri Z.M."/>
        </authorList>
    </citation>
    <scope>VARIANT VWD2 CYS-1313</scope>
</reference>
<reference key="39">
    <citation type="journal article" date="1991" name="Proc. Natl. Acad. Sci. U.S.A.">
        <title>Expression of von Willebrand factor 'Normandy': an autosomal mutation that mimics hemophilia A.</title>
        <authorList>
            <person name="Tuley E.A."/>
            <person name="Gaucher C."/>
            <person name="Jorieux S."/>
            <person name="Worrall N.K."/>
            <person name="Sadler J.E."/>
            <person name="Mazurier C."/>
        </authorList>
    </citation>
    <scope>VARIANT VWD2 MET-791</scope>
</reference>
<reference key="40">
    <citation type="journal article" date="1992" name="Am. J. Hum. Genet.">
        <title>Germ-line mosaicism for a valine-to-methionine substitution at residue 553 in the glycoprotein Ib-binding domain of von Willebrand factor, causing type IIB von Willebrand disease.</title>
        <authorList>
            <person name="Murray E.W."/>
            <person name="Giles A.R."/>
            <person name="Lillicrap D."/>
        </authorList>
    </citation>
    <scope>VARIANT VWD2 MET-1316</scope>
</reference>
<reference key="41">
    <citation type="journal article" date="1992" name="Blood Coagul. Fibrinolysis">
        <title>Molecular study of von Willebrand disease: identification of potential mutations in patients with type IIA and type IIB.</title>
        <authorList>
            <person name="Pietu G."/>
            <person name="Ribba A.S."/>
            <person name="de Paillette L."/>
            <person name="Cherel G."/>
            <person name="Lavergne J.-M."/>
            <person name="Bahnak B.R."/>
            <person name="Meyer D."/>
        </authorList>
    </citation>
    <scope>VARIANTS VWD2 TRP-1306; MET-1316; THR-1628 AND SER-1648</scope>
</reference>
<reference key="42">
    <citation type="journal article" date="1992" name="Br. J. Haematol.">
        <title>Type IIB von Willebrand's disease: gene mutations and clinical presentation in nine families from Denmark, Germany and Sweden.</title>
        <authorList>
            <person name="Donner M."/>
            <person name="Kristoffersson A.-C."/>
            <person name="Lenk H."/>
            <person name="Scheibel E."/>
            <person name="Dahlback B."/>
            <person name="Nilsson I.M."/>
            <person name="Holmberg L."/>
        </authorList>
    </citation>
    <scope>VARIANTS VWD2 TRP-1306; CYS-1308; LEU-1314 AND LEU-1318</scope>
</reference>
<reference key="43">
    <citation type="journal article" date="1992" name="Br. J. Haematol.">
        <title>Defects in type IIA von Willebrand disease: a cysteine 509 to arginine substitution in the mature von Willebrand factor disrupts a disulphide loop involved in the interaction with platelet glycoprotein Ib-IX.</title>
        <authorList>
            <person name="Lavergne J.-M."/>
            <person name="de Paillette L."/>
            <person name="Bahnak B.R."/>
            <person name="Ribba A.-S."/>
            <person name="Fressinaud E."/>
            <person name="Meyer D."/>
            <person name="Pietu G."/>
        </authorList>
    </citation>
    <scope>VARIANT VWD2 ARG-1272</scope>
</reference>
<reference key="44">
    <citation type="journal article" date="1992" name="J. Biol. Chem.">
        <title>Characterization of recombinant von Willebrand factor corresponding to mutations in type IIA and type IIB von Willebrand disease.</title>
        <authorList>
            <person name="Ribba A.S."/>
            <person name="Voorberg J."/>
            <person name="Meyer D."/>
            <person name="Pannekoek H."/>
            <person name="Pietu G."/>
        </authorList>
    </citation>
    <scope>VARIANT VWD2 LYS-1638</scope>
</reference>
<reference key="45">
    <citation type="journal article" date="1992" name="Proc. Natl. Acad. Sci. U.S.A.">
        <title>von Willebrand disease type B: a missense mutation selectively abolishes ristocetin-induced von Willebrand factor binding to platelet glycoprotein Ib.</title>
        <authorList>
            <person name="Rabinowitz I."/>
            <person name="Tuley E.A."/>
            <person name="Mancuso D.J."/>
            <person name="Randi A.M."/>
            <person name="Firkin B.G."/>
            <person name="Howard M.A."/>
            <person name="Sadler J.E."/>
        </authorList>
    </citation>
    <scope>VARIANT VWD2 SER-1324</scope>
</reference>
<reference key="46">
    <citation type="journal article" date="1993" name="Blood">
        <title>Identification of three candidate mutations causing type IIA von Willebrand disease using a rapid, nonradioactive, allele-specific hybridization method.</title>
        <authorList>
            <person name="Inbal A."/>
            <person name="Englender T."/>
            <person name="Kornbrot N."/>
            <person name="Randi A.M."/>
            <person name="Castaman G."/>
            <person name="Mannucci P.M."/>
            <person name="Sadler J.E."/>
        </authorList>
    </citation>
    <scope>VARIANTS VWD2 GLN-1597; ARG-1609 AND GLU-1665</scope>
</reference>
<reference key="47">
    <citation type="journal article" date="1993" name="Br. J. Haematol.">
        <title>Substitution of cysteine for phenylalanine 751 in mature von Willebrand factor is a novel candidate mutation in a family with type IIA von Willebrand disease.</title>
        <authorList>
            <person name="Gaucher C."/>
            <person name="Hanss M."/>
            <person name="Dechavanne M."/>
            <person name="Mazurier C."/>
        </authorList>
    </citation>
    <scope>VARIANT VWD2 CYS-1514</scope>
</reference>
<reference key="48">
    <citation type="journal article" date="1993" name="Eur. J. Haematol.">
        <title>Two new candidate mutations in type IIA von Willebrand's disease (Arg834--&gt;Gly, Gly846--&gt;Arg) and one polymorphism (Tyr821--&gt;Cys) in the A2 region of the von Willebrand factor.</title>
        <authorList>
            <person name="Donner M."/>
            <person name="Kristoffersson A.C."/>
            <person name="Berntorp E."/>
            <person name="Scheibel E."/>
            <person name="Thorsen S."/>
            <person name="Dahlback B."/>
            <person name="Nilsson I.M."/>
            <person name="Holmberg L."/>
        </authorList>
    </citation>
    <scope>VARIANTS VWD2 GLY-1597 AND ARG-1609</scope>
    <scope>VARIANT CYS-1584</scope>
</reference>
<reference key="49">
    <citation type="journal article" date="1993" name="J. Biol. Chem.">
        <title>Type IIB mutation His-505--&gt;Asp implicates a new segment in the control of von Willebrand factor binding to platelet glycoprotein Ib.</title>
        <authorList>
            <person name="Rabinowitz I."/>
            <person name="Randi A.M."/>
            <person name="Shindler K.S."/>
            <person name="Tuley E.A."/>
            <person name="Rustagi P.K."/>
            <person name="Sadler J.E."/>
        </authorList>
    </citation>
    <scope>VARIANT VWD2 ASP-1268</scope>
</reference>
<reference key="50">
    <citation type="journal article" date="1993" name="J. Clin. Invest.">
        <title>von Willebrand factor mutation enhancing interaction with platelets in patients with normal multimeric structure.</title>
        <authorList>
            <person name="Holmberg L."/>
            <person name="Dent J.A."/>
            <person name="Schneppenheim R."/>
            <person name="Budde U."/>
            <person name="Ware J."/>
            <person name="Ruggeri Z.M."/>
        </authorList>
    </citation>
    <scope>VARIANT VWD2 LEU-1266</scope>
</reference>
<reference key="51">
    <citation type="journal article" date="1994" name="Blood">
        <title>Leu 697--&gt;Val mutation in mature von Willebrand factor is responsible for type IIB von Willebrand disease.</title>
        <authorList>
            <person name="Hilbert L."/>
            <person name="Gaucher C."/>
            <person name="de Romeuf C."/>
            <person name="Horellou M.H."/>
            <person name="Vink T."/>
            <person name="Mazurier C."/>
        </authorList>
    </citation>
    <scope>VARIANT VWD2 VAL-1460</scope>
</reference>
<reference key="52">
    <citation type="journal article" date="1994" name="Blood">
        <title>Characterization of Leu777Pro and Ile865Thr type IIA von Willebrand disease mutations.</title>
        <authorList>
            <person name="Lyons S.E."/>
            <person name="Cooney K.A."/>
            <person name="Bockenstedt P."/>
            <person name="Ginsburg D."/>
        </authorList>
    </citation>
    <scope>VARIANTS VWD2 PRO-1540 AND THR-1628</scope>
</reference>
<reference key="53">
    <citation type="journal article" date="1994" name="Genomics">
        <title>Characterization of the von Willebrand factor gene (VWF) in von Willebrand disease type III patients from 24 families of Swedish and Finnish origin.</title>
        <authorList>
            <person name="Zhang Z.P."/>
            <person name="Blombaeck M."/>
            <person name="Egberg N."/>
            <person name="Falk G."/>
            <person name="Anvret M."/>
        </authorList>
    </citation>
    <scope>VARIANT VWD3 TYR-2739</scope>
</reference>
<reference key="54">
    <citation type="journal article" date="1994" name="Hum. Genet.">
        <title>Genetic heterogeneity of severe von Willebrand disease type III in the German population.</title>
        <authorList>
            <person name="Schneppenheim R."/>
            <person name="Krey S."/>
            <person name="Bergmann F."/>
            <person name="Bock D."/>
            <person name="Budde U."/>
            <person name="Lange M."/>
            <person name="Linde R."/>
            <person name="Mittler U."/>
            <person name="Meili E."/>
            <person name="Mertes G."/>
            <person name="Olek K."/>
            <person name="Plendl H."/>
            <person name="Simeoni E."/>
        </authorList>
    </citation>
    <scope>VARIANT VWD3 CYS-377</scope>
</reference>
<reference key="55">
    <citation type="journal article" date="1994" name="Int. J. Hematol.">
        <title>Investigation of type IIC von Willebrand disease.</title>
        <authorList>
            <person name="Uno H."/>
            <person name="Nishida N."/>
            <person name="Ishizaki J."/>
            <person name="Suzuki M."/>
            <person name="Nishikubo T."/>
            <person name="Miyata S."/>
            <person name="Takahashi Y."/>
            <person name="Yoshioka A."/>
            <person name="Tsuda K."/>
        </authorList>
    </citation>
    <scope>VARIANT VWD2 SER-528</scope>
</reference>
<reference key="56">
    <citation type="journal article" date="1995" name="Blood">
        <title>Identification of two mutations (Arg611Cys and Arg611His) in the A1 loop of von Willebrand factor (vWF) responsible for type 2 von Willebrand disease with decreased platelet-dependent function of vWF.</title>
        <authorList>
            <person name="Hilbert L."/>
            <person name="Gaucher C."/>
            <person name="Mazurier C."/>
        </authorList>
    </citation>
    <scope>VARIANTS VWD2 CYS-1374 AND HIS-1374</scope>
</reference>
<reference key="57">
    <citation type="journal article" date="1995" name="Br. J. Haematol.">
        <title>A novel candidate mutation (Arg611--&gt;His) in type I 'platelet discordant' von Willebrand's disease with desmopressin-induced thrombocytopenia.</title>
        <authorList>
            <person name="Castaman G."/>
            <person name="Eikenboom C.J.C."/>
            <person name="Rodeghiero F."/>
            <person name="Briet K."/>
            <person name="Reitsma P.H."/>
        </authorList>
    </citation>
    <scope>VARIANT VWD2 HIS-1374</scope>
</reference>
<reference key="58">
    <citation type="journal article" date="1995" name="Br. J. Haematol.">
        <title>Effects of different amino-acid substitutions in the leucine 694-proline 708 segment of recombinant von Willebrand factor.</title>
        <authorList>
            <person name="Hilbert L."/>
            <person name="Gaucher C."/>
            <person name="Mazurier C."/>
        </authorList>
    </citation>
    <scope>VARIANT VWD2 VAL-1461</scope>
</reference>
<reference key="59">
    <citation type="journal article" date="1995" name="Hum. Genet.">
        <title>Identification of a candidate missense mutation in a family with von Willebrand disease type IIC.</title>
        <authorList>
            <person name="Schneppenheim R."/>
            <person name="Thomas K.B."/>
            <person name="Krey S."/>
            <person name="Budde U."/>
            <person name="Jessat U."/>
            <person name="Sutor A.H."/>
            <person name="Zeiger B."/>
        </authorList>
    </citation>
    <scope>VARIANT VWD2 ARG-550</scope>
</reference>
<reference key="60">
    <citation type="journal article" date="1996" name="Proc. Natl. Acad. Sci. U.S.A.">
        <title>Defective dimerization of von Willebrand factor subunits due to a Cys-&gt; Arg mutation in type IID von Willebrand disease.</title>
        <authorList>
            <person name="Schneppenheim R."/>
            <person name="Brassard J."/>
            <person name="Krey S."/>
            <person name="Budde U."/>
            <person name="Kunicki T.J."/>
            <person name="Holmberg L."/>
            <person name="Ware J."/>
            <person name="Ruggeri Z.M."/>
        </authorList>
    </citation>
    <scope>VARIANT VWD2 ARG-2773</scope>
</reference>
<reference key="61">
    <citation type="journal article" date="2000" name="Blood">
        <title>A novel von Willebrand disease-causing mutation (Arg273Trp) in the von Willebrand factor propeptide that results in defective multimerization and secretion.</title>
        <authorList>
            <person name="Allen S."/>
            <person name="Abuzenadah A.M."/>
            <person name="Hinks J."/>
            <person name="Blagg J.L."/>
            <person name="Gursel T."/>
            <person name="Ingerslev J."/>
            <person name="Goodeve A.C."/>
            <person name="Peake I.R."/>
            <person name="Daly M.E."/>
        </authorList>
    </citation>
    <scope>VARIANT VWD1 TRP-273</scope>
    <scope>VARIANT VWD3 TRP-273</scope>
</reference>
<reference key="62">
    <citation type="journal article" date="2001" name="Blood">
        <title>Type 1 von Willebrand disease mutation Cys1149Arg causes intracellular retention and degradation of heterodimers: a possible general mechanism for dominant mutations of oligomeric proteins.</title>
        <authorList>
            <person name="Bodo I."/>
            <person name="Katsumi A."/>
            <person name="Tuley E.A."/>
            <person name="Eikenboom J.C."/>
            <person name="Dong Z."/>
            <person name="Sadler J.E."/>
        </authorList>
    </citation>
    <scope>VARIANT VWD1 ARG-1149</scope>
    <scope>MUTAGENESIS OF CYS-1149 AND CYS-1169</scope>
</reference>
<reference key="63">
    <citation type="journal article" date="2002" name="Br. J. Haematol.">
        <title>Factor VIII deficiency not induced by FVIII gene mutation in a female first cousin of two brothers with haemophilia A.</title>
        <authorList>
            <person name="Mazurier C."/>
            <person name="Parquet-Gernez A."/>
            <person name="Gaucher C."/>
            <person name="Lavergne J.-M."/>
            <person name="Goudemand J."/>
        </authorList>
    </citation>
    <scope>VARIANT VWD2 ARG-1060</scope>
</reference>
<reference key="64">
    <citation type="journal article" date="2005" name="Br. J. Haematol.">
        <title>The prevalence of the cysteine1584 variant of von Willebrand factor is increased in type 1 von Willebrand disease: co-segregation with increased susceptibility to ADAMTS13 proteolysis but not clinical phenotype.</title>
        <authorList>
            <person name="Bowen D.J."/>
            <person name="Collins P.W."/>
            <person name="Lester W."/>
            <person name="Cumming A.M."/>
            <person name="Keeney S."/>
            <person name="Grundy P."/>
            <person name="Enayat S.M."/>
            <person name="Bolton-Maggs P.H."/>
            <person name="Keeling D.M."/>
            <person name="Khair K."/>
            <person name="Tait R.C."/>
            <person name="Wilde J.T."/>
            <person name="Pasi K.J."/>
            <person name="Hill F.G."/>
        </authorList>
    </citation>
    <scope>VARIANT CYS-1584</scope>
</reference>
<reference key="65">
    <citation type="journal article" date="2006" name="Science">
        <title>The consensus coding sequences of human breast and colorectal cancers.</title>
        <authorList>
            <person name="Sjoeblom T."/>
            <person name="Jones S."/>
            <person name="Wood L.D."/>
            <person name="Parsons D.W."/>
            <person name="Lin J."/>
            <person name="Barber T.D."/>
            <person name="Mandelker D."/>
            <person name="Leary R.J."/>
            <person name="Ptak J."/>
            <person name="Silliman N."/>
            <person name="Szabo S."/>
            <person name="Buckhaults P."/>
            <person name="Farrell C."/>
            <person name="Meeh P."/>
            <person name="Markowitz S.D."/>
            <person name="Willis J."/>
            <person name="Dawson D."/>
            <person name="Willson J.K.V."/>
            <person name="Gazdar A.F."/>
            <person name="Hartigan J."/>
            <person name="Wu L."/>
            <person name="Liu C."/>
            <person name="Parmigiani G."/>
            <person name="Park B.H."/>
            <person name="Bachman K.E."/>
            <person name="Papadopoulos N."/>
            <person name="Vogelstein B."/>
            <person name="Kinzler K.W."/>
            <person name="Velculescu V.E."/>
        </authorList>
    </citation>
    <scope>VARIANT [LARGE SCALE ANALYSIS] CYS-1570</scope>
</reference>
<reference key="66">
    <citation type="journal article" date="2012" name="Haemophilia">
        <title>C1272F: a novel type 2A von Willebrand's disease mutation in A1 domain; its clinical significance.</title>
        <authorList>
            <person name="Woods A.I."/>
            <person name="Sanchez-Luceros A."/>
            <person name="Kempfer A.C."/>
            <person name="Powazniak Y."/>
            <person name="Calderazzo Pereyra J.C."/>
            <person name="Blanco A.N."/>
            <person name="Meschengieser S.S."/>
            <person name="Lazzari M.A."/>
        </authorList>
    </citation>
    <scope>VARIANT VWD2 PHE-1272</scope>
</reference>
<comment type="function">
    <text>Important in the maintenance of hemostasis, it promotes adhesion of platelets to the sites of vascular injury by forming a molecular bridge between sub-endothelial collagen matrix and platelet-surface receptor complex GPIb-IX-V. Also acts as a chaperone for coagulation factor VIII, delivering it to the site of injury, stabilizing its heterodimeric structure and protecting it from premature clearance from plasma.</text>
</comment>
<comment type="subunit">
    <text evidence="8 55">Multimeric. Interacts with F8.</text>
</comment>
<comment type="interaction">
    <interactant intactId="EBI-981819">
        <id>P04275</id>
    </interactant>
    <interactant intactId="EBI-981764">
        <id>Q76LX8</id>
        <label>ADAMTS13</label>
    </interactant>
    <organismsDiffer>false</organismsDiffer>
    <experiments>19</experiments>
</comment>
<comment type="interaction">
    <interactant intactId="EBI-981819">
        <id>P04275</id>
    </interactant>
    <interactant intactId="EBI-1046394">
        <id>P00451</id>
        <label>F8</label>
    </interactant>
    <organismsDiffer>false</organismsDiffer>
    <experiments>2</experiments>
</comment>
<comment type="interaction">
    <interactant intactId="EBI-981819">
        <id>P04275</id>
    </interactant>
    <interactant intactId="EBI-21454065">
        <id>PRO_0000002967</id>
        <label>F8</label>
        <dbReference type="UniProtKB" id="P00451"/>
    </interactant>
    <organismsDiffer>false</organismsDiffer>
    <experiments>2</experiments>
</comment>
<comment type="interaction">
    <interactant intactId="EBI-981819">
        <id>P04275</id>
    </interactant>
    <interactant intactId="EBI-297082">
        <id>P07359</id>
        <label>GP1BA</label>
    </interactant>
    <organismsDiffer>false</organismsDiffer>
    <experiments>2</experiments>
</comment>
<comment type="interaction">
    <interactant intactId="EBI-981819">
        <id>P04275</id>
    </interactant>
    <interactant intactId="EBI-981819">
        <id>P04275</id>
        <label>VWF</label>
    </interactant>
    <organismsDiffer>false</organismsDiffer>
    <experiments>21</experiments>
</comment>
<comment type="interaction">
    <interactant intactId="EBI-25896548">
        <id>P04275-2</id>
    </interactant>
    <interactant intactId="EBI-10254793">
        <id>Q6XD76</id>
        <label>ASCL4</label>
    </interactant>
    <organismsDiffer>false</organismsDiffer>
    <experiments>3</experiments>
</comment>
<comment type="interaction">
    <interactant intactId="EBI-25896548">
        <id>P04275-2</id>
    </interactant>
    <interactant intactId="EBI-3924130">
        <id>Q99944</id>
        <label>EGFL8</label>
    </interactant>
    <organismsDiffer>false</organismsDiffer>
    <experiments>3</experiments>
</comment>
<comment type="interaction">
    <interactant intactId="EBI-25896548">
        <id>P04275-2</id>
    </interactant>
    <interactant intactId="EBI-25830459">
        <id>Q6ZQX7-4</id>
        <label>LIAT1</label>
    </interactant>
    <organismsDiffer>false</organismsDiffer>
    <experiments>3</experiments>
</comment>
<comment type="interaction">
    <interactant intactId="EBI-25896548">
        <id>P04275-2</id>
    </interactant>
    <interactant intactId="EBI-396540">
        <id>Q12888</id>
        <label>TP53BP1</label>
    </interactant>
    <organismsDiffer>false</organismsDiffer>
    <experiments>3</experiments>
</comment>
<comment type="subcellular location">
    <subcellularLocation>
        <location evidence="8">Secreted</location>
    </subcellularLocation>
    <subcellularLocation>
        <location evidence="8">Secreted</location>
        <location evidence="8">Extracellular space</location>
        <location evidence="8">Extracellular matrix</location>
    </subcellularLocation>
    <text>Localized to storage granules.</text>
</comment>
<comment type="alternative products">
    <event type="alternative splicing"/>
    <isoform>
        <id>P04275-1</id>
        <name>1</name>
        <sequence type="displayed"/>
    </isoform>
    <isoform>
        <id>P04275-2</id>
        <name>2</name>
        <sequence type="described" ref="VSP_056527 VSP_056528 VSP_056529"/>
    </isoform>
</comment>
<comment type="tissue specificity">
    <text>Plasma.</text>
</comment>
<comment type="domain">
    <text>The von Willebrand antigen 2 is required for multimerization of vWF and for its targeting to storage granules.</text>
</comment>
<comment type="PTM">
    <text>All cysteine residues are involved in intrachain or interchain disulfide bonds.</text>
</comment>
<comment type="PTM">
    <text evidence="16 25 26">N- and O-glycosylated.</text>
</comment>
<comment type="disease" evidence="7 9">
    <disease id="DI-02903">
        <name>von Willebrand disease 1</name>
        <acronym>VWD1</acronym>
        <description>A common hemorrhagic disorder due to defects in von Willebrand factor protein and resulting in impaired platelet aggregation. Von Willebrand disease type 1 is characterized by partial quantitative deficiency of circulating von Willebrand factor, that is otherwise structurally and functionally normal. Clinical manifestations are mucocutaneous bleeding, such as epistaxis and menorrhagia, and prolonged bleeding after surgery or trauma.</description>
        <dbReference type="MIM" id="193400"/>
    </disease>
    <text>The disease is caused by variants affecting the gene represented in this entry.</text>
</comment>
<comment type="disease" evidence="10 11 12 13 14 15 18 19 21 22 23 24 28 29 30 32 40 41 42 44 46 47 48 49 50 51 52 53 54">
    <disease id="DI-02904">
        <name>von Willebrand disease 2</name>
        <acronym>VWD2</acronym>
        <description>A hemorrhagic disorder due to defects in von Willebrand factor protein and resulting in altered platelet aggregation. Von Willebrand disease type 2 is characterized by qualitative deficiency and functional anomalies of von Willebrand factor. It is divided in different subtypes including 2A, 2B, 2M and 2N (Normandy variant). The mutant VWF protein in types 2A, 2B and 2M are defective in their platelet-dependent function, whereas the mutant protein in type 2N is defective in its ability to bind factor VIII. Clinical manifestations are mucocutaneous bleeding, such as epistaxis and menorrhagia, and prolonged bleeding after surgery or trauma.</description>
        <dbReference type="MIM" id="613554"/>
    </disease>
    <text>The disease is caused by variants affecting the gene represented in this entry.</text>
</comment>
<comment type="disease" evidence="7 43 45">
    <disease id="DI-02734">
        <name>von Willebrand disease 3</name>
        <acronym>VWD3</acronym>
        <description>A severe hemorrhagic disorder due to a total or near total absence of von Willebrand factor in the plasma and cellular compartments, also leading to a profound deficiency of plasmatic factor VIII. Bleeding usually starts in infancy and can include epistaxis, recurrent mucocutaneous bleeding, excessive bleeding after minor trauma, and hemarthroses.</description>
        <dbReference type="MIM" id="277480"/>
    </disease>
    <text>The disease is caused by variants affecting the gene represented in this entry.</text>
</comment>
<comment type="sequence caution" evidence="58">
    <conflict type="miscellaneous discrepancy">
        <sequence resource="EMBL-CDS" id="AAB59512"/>
    </conflict>
    <text>Contaminating sequence. Sequence of unknown origin in the N-terminal part.</text>
</comment>
<comment type="online information" name="vWF">
    <link uri="http://vwf.hemobase.com/"/>
    <text>von Willebrand factor (vWF) mutation db</text>
</comment>
<comment type="online information" name="Wikipedia">
    <link uri="https://en.wikipedia.org/wiki/Von_Willebrand_factor"/>
    <text>Von Willebrand factor entry</text>
</comment>
<proteinExistence type="evidence at protein level"/>
<evidence type="ECO:0000250" key="1"/>
<evidence type="ECO:0000255" key="2"/>
<evidence type="ECO:0000255" key="3">
    <source>
        <dbReference type="PROSITE-ProRule" id="PRU00039"/>
    </source>
</evidence>
<evidence type="ECO:0000255" key="4">
    <source>
        <dbReference type="PROSITE-ProRule" id="PRU00219"/>
    </source>
</evidence>
<evidence type="ECO:0000255" key="5">
    <source>
        <dbReference type="PROSITE-ProRule" id="PRU00220"/>
    </source>
</evidence>
<evidence type="ECO:0000255" key="6">
    <source>
        <dbReference type="PROSITE-ProRule" id="PRU00580"/>
    </source>
</evidence>
<evidence type="ECO:0000269" key="7">
    <source>
    </source>
</evidence>
<evidence type="ECO:0000269" key="8">
    <source>
    </source>
</evidence>
<evidence type="ECO:0000269" key="9">
    <source>
    </source>
</evidence>
<evidence type="ECO:0000269" key="10">
    <source>
    </source>
</evidence>
<evidence type="ECO:0000269" key="11">
    <source>
    </source>
</evidence>
<evidence type="ECO:0000269" key="12">
    <source>
    </source>
</evidence>
<evidence type="ECO:0000269" key="13">
    <source>
    </source>
</evidence>
<evidence type="ECO:0000269" key="14">
    <source>
    </source>
</evidence>
<evidence type="ECO:0000269" key="15">
    <source>
    </source>
</evidence>
<evidence type="ECO:0000269" key="16">
    <source>
    </source>
</evidence>
<evidence type="ECO:0000269" key="17">
    <source>
    </source>
</evidence>
<evidence type="ECO:0000269" key="18">
    <source>
    </source>
</evidence>
<evidence type="ECO:0000269" key="19">
    <source>
    </source>
</evidence>
<evidence type="ECO:0000269" key="20">
    <source>
    </source>
</evidence>
<evidence type="ECO:0000269" key="21">
    <source>
    </source>
</evidence>
<evidence type="ECO:0000269" key="22">
    <source>
    </source>
</evidence>
<evidence type="ECO:0000269" key="23">
    <source>
    </source>
</evidence>
<evidence type="ECO:0000269" key="24">
    <source>
    </source>
</evidence>
<evidence type="ECO:0000269" key="25">
    <source>
    </source>
</evidence>
<evidence type="ECO:0000269" key="26">
    <source>
    </source>
</evidence>
<evidence type="ECO:0000269" key="27">
    <source>
    </source>
</evidence>
<evidence type="ECO:0000269" key="28">
    <source>
    </source>
</evidence>
<evidence type="ECO:0000269" key="29">
    <source>
    </source>
</evidence>
<evidence type="ECO:0000269" key="30">
    <source>
    </source>
</evidence>
<evidence type="ECO:0000269" key="31">
    <source>
    </source>
</evidence>
<evidence type="ECO:0000269" key="32">
    <source>
    </source>
</evidence>
<evidence type="ECO:0000269" key="33">
    <source>
    </source>
</evidence>
<evidence type="ECO:0000269" key="34">
    <source>
    </source>
</evidence>
<evidence type="ECO:0000269" key="35">
    <source>
    </source>
</evidence>
<evidence type="ECO:0000269" key="36">
    <source>
    </source>
</evidence>
<evidence type="ECO:0000269" key="37">
    <source>
    </source>
</evidence>
<evidence type="ECO:0000269" key="38">
    <source>
    </source>
</evidence>
<evidence type="ECO:0000269" key="39">
    <source>
    </source>
</evidence>
<evidence type="ECO:0000269" key="40">
    <source>
    </source>
</evidence>
<evidence type="ECO:0000269" key="41">
    <source>
    </source>
</evidence>
<evidence type="ECO:0000269" key="42">
    <source>
    </source>
</evidence>
<evidence type="ECO:0000269" key="43">
    <source>
    </source>
</evidence>
<evidence type="ECO:0000269" key="44">
    <source>
    </source>
</evidence>
<evidence type="ECO:0000269" key="45">
    <source>
    </source>
</evidence>
<evidence type="ECO:0000269" key="46">
    <source>
    </source>
</evidence>
<evidence type="ECO:0000269" key="47">
    <source>
    </source>
</evidence>
<evidence type="ECO:0000269" key="48">
    <source>
    </source>
</evidence>
<evidence type="ECO:0000269" key="49">
    <source>
    </source>
</evidence>
<evidence type="ECO:0000269" key="50">
    <source>
    </source>
</evidence>
<evidence type="ECO:0000269" key="51">
    <source>
    </source>
</evidence>
<evidence type="ECO:0000269" key="52">
    <source>
    </source>
</evidence>
<evidence type="ECO:0000269" key="53">
    <source>
    </source>
</evidence>
<evidence type="ECO:0000269" key="54">
    <source>
    </source>
</evidence>
<evidence type="ECO:0000269" key="55">
    <source>
    </source>
</evidence>
<evidence type="ECO:0000269" key="56">
    <source>
    </source>
</evidence>
<evidence type="ECO:0000303" key="57">
    <source>
    </source>
</evidence>
<evidence type="ECO:0000305" key="58"/>
<evidence type="ECO:0007829" key="59">
    <source>
        <dbReference type="PDB" id="1ATZ"/>
    </source>
</evidence>
<evidence type="ECO:0007829" key="60">
    <source>
        <dbReference type="PDB" id="1SQ0"/>
    </source>
</evidence>
<evidence type="ECO:0007829" key="61">
    <source>
        <dbReference type="PDB" id="1U0N"/>
    </source>
</evidence>
<evidence type="ECO:0007829" key="62">
    <source>
        <dbReference type="PDB" id="2ADF"/>
    </source>
</evidence>
<evidence type="ECO:0007829" key="63">
    <source>
        <dbReference type="PDB" id="3GXB"/>
    </source>
</evidence>
<evidence type="ECO:0007829" key="64">
    <source>
        <dbReference type="PDB" id="3ZQK"/>
    </source>
</evidence>
<evidence type="ECO:0007829" key="65">
    <source>
        <dbReference type="PDB" id="4C29"/>
    </source>
</evidence>
<evidence type="ECO:0007829" key="66">
    <source>
        <dbReference type="PDB" id="4C2B"/>
    </source>
</evidence>
<evidence type="ECO:0007829" key="67">
    <source>
        <dbReference type="PDB" id="4DMU"/>
    </source>
</evidence>
<evidence type="ECO:0007829" key="68">
    <source>
        <dbReference type="PDB" id="4NT5"/>
    </source>
</evidence>
<evidence type="ECO:0007829" key="69">
    <source>
        <dbReference type="PDB" id="5BV8"/>
    </source>
</evidence>
<evidence type="ECO:0007829" key="70">
    <source>
        <dbReference type="PDB" id="6FWN"/>
    </source>
</evidence>
<evidence type="ECO:0007829" key="71">
    <source>
        <dbReference type="PDB" id="6N29"/>
    </source>
</evidence>
<evidence type="ECO:0007829" key="72">
    <source>
        <dbReference type="PDB" id="7KWO"/>
    </source>
</evidence>
<evidence type="ECO:0007829" key="73">
    <source>
        <dbReference type="PDB" id="7P4N"/>
    </source>
</evidence>
<evidence type="ECO:0007829" key="74">
    <source>
        <dbReference type="PDB" id="7ZWH"/>
    </source>
</evidence>
<gene>
    <name type="primary">VWF</name>
    <name type="synonym">F8VWF</name>
</gene>
<name>VWF_HUMAN</name>
<dbReference type="EMBL" id="X04385">
    <property type="protein sequence ID" value="CAA27972.1"/>
    <property type="molecule type" value="mRNA"/>
</dbReference>
<dbReference type="EMBL" id="M25865">
    <property type="protein sequence ID" value="AAB59458.1"/>
    <property type="molecule type" value="Genomic_DNA"/>
</dbReference>
<dbReference type="EMBL" id="M25828">
    <property type="protein sequence ID" value="AAB59458.1"/>
    <property type="status" value="JOINED"/>
    <property type="molecule type" value="Genomic_DNA"/>
</dbReference>
<dbReference type="EMBL" id="M25829">
    <property type="protein sequence ID" value="AAB59458.1"/>
    <property type="status" value="JOINED"/>
    <property type="molecule type" value="Genomic_DNA"/>
</dbReference>
<dbReference type="EMBL" id="M25830">
    <property type="protein sequence ID" value="AAB59458.1"/>
    <property type="status" value="JOINED"/>
    <property type="molecule type" value="Genomic_DNA"/>
</dbReference>
<dbReference type="EMBL" id="M25831">
    <property type="protein sequence ID" value="AAB59458.1"/>
    <property type="status" value="JOINED"/>
    <property type="molecule type" value="Genomic_DNA"/>
</dbReference>
<dbReference type="EMBL" id="M25832">
    <property type="protein sequence ID" value="AAB59458.1"/>
    <property type="status" value="JOINED"/>
    <property type="molecule type" value="Genomic_DNA"/>
</dbReference>
<dbReference type="EMBL" id="M25833">
    <property type="protein sequence ID" value="AAB59458.1"/>
    <property type="status" value="JOINED"/>
    <property type="molecule type" value="Genomic_DNA"/>
</dbReference>
<dbReference type="EMBL" id="M25834">
    <property type="protein sequence ID" value="AAB59458.1"/>
    <property type="status" value="JOINED"/>
    <property type="molecule type" value="Genomic_DNA"/>
</dbReference>
<dbReference type="EMBL" id="M25835">
    <property type="protein sequence ID" value="AAB59458.1"/>
    <property type="status" value="JOINED"/>
    <property type="molecule type" value="Genomic_DNA"/>
</dbReference>
<dbReference type="EMBL" id="M25836">
    <property type="protein sequence ID" value="AAB59458.1"/>
    <property type="status" value="JOINED"/>
    <property type="molecule type" value="Genomic_DNA"/>
</dbReference>
<dbReference type="EMBL" id="M25837">
    <property type="protein sequence ID" value="AAB59458.1"/>
    <property type="status" value="JOINED"/>
    <property type="molecule type" value="Genomic_DNA"/>
</dbReference>
<dbReference type="EMBL" id="M25838">
    <property type="protein sequence ID" value="AAB59458.1"/>
    <property type="status" value="JOINED"/>
    <property type="molecule type" value="Genomic_DNA"/>
</dbReference>
<dbReference type="EMBL" id="M25839">
    <property type="protein sequence ID" value="AAB59458.1"/>
    <property type="status" value="JOINED"/>
    <property type="molecule type" value="Genomic_DNA"/>
</dbReference>
<dbReference type="EMBL" id="M25840">
    <property type="protein sequence ID" value="AAB59458.1"/>
    <property type="status" value="JOINED"/>
    <property type="molecule type" value="Genomic_DNA"/>
</dbReference>
<dbReference type="EMBL" id="M25841">
    <property type="protein sequence ID" value="AAB59458.1"/>
    <property type="status" value="JOINED"/>
    <property type="molecule type" value="Genomic_DNA"/>
</dbReference>
<dbReference type="EMBL" id="M25842">
    <property type="protein sequence ID" value="AAB59458.1"/>
    <property type="status" value="JOINED"/>
    <property type="molecule type" value="Genomic_DNA"/>
</dbReference>
<dbReference type="EMBL" id="M25843">
    <property type="protein sequence ID" value="AAB59458.1"/>
    <property type="status" value="JOINED"/>
    <property type="molecule type" value="Genomic_DNA"/>
</dbReference>
<dbReference type="EMBL" id="M25844">
    <property type="protein sequence ID" value="AAB59458.1"/>
    <property type="status" value="JOINED"/>
    <property type="molecule type" value="Genomic_DNA"/>
</dbReference>
<dbReference type="EMBL" id="M25845">
    <property type="protein sequence ID" value="AAB59458.1"/>
    <property type="status" value="JOINED"/>
    <property type="molecule type" value="Genomic_DNA"/>
</dbReference>
<dbReference type="EMBL" id="M25846">
    <property type="protein sequence ID" value="AAB59458.1"/>
    <property type="status" value="JOINED"/>
    <property type="molecule type" value="Genomic_DNA"/>
</dbReference>
<dbReference type="EMBL" id="M25847">
    <property type="protein sequence ID" value="AAB59458.1"/>
    <property type="status" value="JOINED"/>
    <property type="molecule type" value="Genomic_DNA"/>
</dbReference>
<dbReference type="EMBL" id="M25848">
    <property type="protein sequence ID" value="AAB59458.1"/>
    <property type="status" value="JOINED"/>
    <property type="molecule type" value="Genomic_DNA"/>
</dbReference>
<dbReference type="EMBL" id="M25849">
    <property type="protein sequence ID" value="AAB59458.1"/>
    <property type="status" value="JOINED"/>
    <property type="molecule type" value="Genomic_DNA"/>
</dbReference>
<dbReference type="EMBL" id="M25850">
    <property type="protein sequence ID" value="AAB59458.1"/>
    <property type="status" value="JOINED"/>
    <property type="molecule type" value="Genomic_DNA"/>
</dbReference>
<dbReference type="EMBL" id="M25851">
    <property type="protein sequence ID" value="AAB59458.1"/>
    <property type="status" value="JOINED"/>
    <property type="molecule type" value="Genomic_DNA"/>
</dbReference>
<dbReference type="EMBL" id="M25852">
    <property type="protein sequence ID" value="AAB59458.1"/>
    <property type="status" value="JOINED"/>
    <property type="molecule type" value="Genomic_DNA"/>
</dbReference>
<dbReference type="EMBL" id="M25853">
    <property type="protein sequence ID" value="AAB59458.1"/>
    <property type="status" value="JOINED"/>
    <property type="molecule type" value="Genomic_DNA"/>
</dbReference>
<dbReference type="EMBL" id="M25854">
    <property type="protein sequence ID" value="AAB59458.1"/>
    <property type="status" value="JOINED"/>
    <property type="molecule type" value="Genomic_DNA"/>
</dbReference>
<dbReference type="EMBL" id="M25855">
    <property type="protein sequence ID" value="AAB59458.1"/>
    <property type="status" value="JOINED"/>
    <property type="molecule type" value="Genomic_DNA"/>
</dbReference>
<dbReference type="EMBL" id="M25856">
    <property type="protein sequence ID" value="AAB59458.1"/>
    <property type="status" value="JOINED"/>
    <property type="molecule type" value="Genomic_DNA"/>
</dbReference>
<dbReference type="EMBL" id="M25857">
    <property type="protein sequence ID" value="AAB59458.1"/>
    <property type="status" value="JOINED"/>
    <property type="molecule type" value="Genomic_DNA"/>
</dbReference>
<dbReference type="EMBL" id="M25858">
    <property type="protein sequence ID" value="AAB59458.1"/>
    <property type="status" value="JOINED"/>
    <property type="molecule type" value="Genomic_DNA"/>
</dbReference>
<dbReference type="EMBL" id="M25859">
    <property type="protein sequence ID" value="AAB59458.1"/>
    <property type="status" value="JOINED"/>
    <property type="molecule type" value="Genomic_DNA"/>
</dbReference>
<dbReference type="EMBL" id="M25860">
    <property type="protein sequence ID" value="AAB59458.1"/>
    <property type="status" value="JOINED"/>
    <property type="molecule type" value="Genomic_DNA"/>
</dbReference>
<dbReference type="EMBL" id="M25861">
    <property type="protein sequence ID" value="AAB59458.1"/>
    <property type="status" value="JOINED"/>
    <property type="molecule type" value="Genomic_DNA"/>
</dbReference>
<dbReference type="EMBL" id="M25862">
    <property type="protein sequence ID" value="AAB59458.1"/>
    <property type="status" value="JOINED"/>
    <property type="molecule type" value="Genomic_DNA"/>
</dbReference>
<dbReference type="EMBL" id="M25863">
    <property type="protein sequence ID" value="AAB59458.1"/>
    <property type="status" value="JOINED"/>
    <property type="molecule type" value="Genomic_DNA"/>
</dbReference>
<dbReference type="EMBL" id="M25864">
    <property type="protein sequence ID" value="AAB59458.1"/>
    <property type="status" value="JOINED"/>
    <property type="molecule type" value="Genomic_DNA"/>
</dbReference>
<dbReference type="EMBL" id="AC005845">
    <property type="status" value="NOT_ANNOTATED_CDS"/>
    <property type="molecule type" value="Genomic_DNA"/>
</dbReference>
<dbReference type="EMBL" id="AC005846">
    <property type="status" value="NOT_ANNOTATED_CDS"/>
    <property type="molecule type" value="Genomic_DNA"/>
</dbReference>
<dbReference type="EMBL" id="AC005904">
    <property type="status" value="NOT_ANNOTATED_CDS"/>
    <property type="molecule type" value="Genomic_DNA"/>
</dbReference>
<dbReference type="EMBL" id="CH471116">
    <property type="protein sequence ID" value="EAW88817.1"/>
    <property type="molecule type" value="Genomic_DNA"/>
</dbReference>
<dbReference type="EMBL" id="BC022258">
    <property type="protein sequence ID" value="AAH22258.1"/>
    <property type="molecule type" value="mRNA"/>
</dbReference>
<dbReference type="EMBL" id="X04146">
    <property type="protein sequence ID" value="CAA27765.1"/>
    <property type="molecule type" value="mRNA"/>
</dbReference>
<dbReference type="EMBL" id="X06828">
    <property type="protein sequence ID" value="CAA29985.1"/>
    <property type="molecule type" value="Genomic_DNA"/>
</dbReference>
<dbReference type="EMBL" id="X06829">
    <property type="protein sequence ID" value="CAA29985.1"/>
    <property type="status" value="JOINED"/>
    <property type="molecule type" value="Genomic_DNA"/>
</dbReference>
<dbReference type="EMBL" id="M17588">
    <property type="protein sequence ID" value="AAA65940.1"/>
    <property type="molecule type" value="mRNA"/>
</dbReference>
<dbReference type="EMBL" id="M10321">
    <property type="protein sequence ID" value="AAB59512.1"/>
    <property type="status" value="ALT_SEQ"/>
    <property type="molecule type" value="mRNA"/>
</dbReference>
<dbReference type="EMBL" id="M60675">
    <property type="protein sequence ID" value="AAA61295.1"/>
    <property type="molecule type" value="Genomic_DNA"/>
</dbReference>
<dbReference type="EMBL" id="U81237">
    <property type="protein sequence ID" value="AAB39987.1"/>
    <property type="molecule type" value="mRNA"/>
</dbReference>
<dbReference type="EMBL" id="K03028">
    <property type="protein sequence ID" value="AAA61293.1"/>
    <property type="molecule type" value="mRNA"/>
</dbReference>
<dbReference type="EMBL" id="X02672">
    <property type="protein sequence ID" value="CAA26503.1"/>
    <property type="molecule type" value="mRNA"/>
</dbReference>
<dbReference type="EMBL" id="M16946">
    <property type="protein sequence ID" value="AAA61294.1"/>
    <property type="molecule type" value="Genomic_DNA"/>
</dbReference>
<dbReference type="EMBL" id="M16945">
    <property type="protein sequence ID" value="AAA61294.1"/>
    <property type="status" value="JOINED"/>
    <property type="molecule type" value="Genomic_DNA"/>
</dbReference>
<dbReference type="CCDS" id="CCDS8539.1">
    <molecule id="P04275-1"/>
</dbReference>
<dbReference type="PIR" id="A34480">
    <property type="entry name" value="VWHU"/>
</dbReference>
<dbReference type="RefSeq" id="NP_000543.3">
    <molecule id="P04275-1"/>
    <property type="nucleotide sequence ID" value="NM_000552.5"/>
</dbReference>
<dbReference type="RefSeq" id="XP_047285457.1">
    <molecule id="P04275-1"/>
    <property type="nucleotide sequence ID" value="XM_047429501.1"/>
</dbReference>
<dbReference type="PDB" id="1AO3">
    <property type="method" value="X-ray"/>
    <property type="resolution" value="2.20 A"/>
    <property type="chains" value="A/B=1686-1872"/>
</dbReference>
<dbReference type="PDB" id="1ATZ">
    <property type="method" value="X-ray"/>
    <property type="resolution" value="1.80 A"/>
    <property type="chains" value="A/B=1685-1873"/>
</dbReference>
<dbReference type="PDB" id="1AUQ">
    <property type="method" value="X-ray"/>
    <property type="resolution" value="2.30 A"/>
    <property type="chains" value="A=1261-1468"/>
</dbReference>
<dbReference type="PDB" id="1FE8">
    <property type="method" value="X-ray"/>
    <property type="resolution" value="2.03 A"/>
    <property type="chains" value="A/B/C=1683-1874"/>
</dbReference>
<dbReference type="PDB" id="1FNS">
    <property type="method" value="X-ray"/>
    <property type="resolution" value="2.00 A"/>
    <property type="chains" value="A=1271-1465"/>
</dbReference>
<dbReference type="PDB" id="1IJB">
    <property type="method" value="X-ray"/>
    <property type="resolution" value="1.80 A"/>
    <property type="chains" value="A=1263-1464"/>
</dbReference>
<dbReference type="PDB" id="1IJK">
    <property type="method" value="X-ray"/>
    <property type="resolution" value="2.60 A"/>
    <property type="chains" value="A=1263-1464"/>
</dbReference>
<dbReference type="PDB" id="1M10">
    <property type="method" value="X-ray"/>
    <property type="resolution" value="3.10 A"/>
    <property type="chains" value="A=1261-1468"/>
</dbReference>
<dbReference type="PDB" id="1OAK">
    <property type="method" value="X-ray"/>
    <property type="resolution" value="2.20 A"/>
    <property type="chains" value="A=1271-1465"/>
</dbReference>
<dbReference type="PDB" id="1SQ0">
    <property type="method" value="X-ray"/>
    <property type="resolution" value="2.60 A"/>
    <property type="chains" value="A=1259-1471"/>
</dbReference>
<dbReference type="PDB" id="1U0N">
    <property type="method" value="X-ray"/>
    <property type="resolution" value="2.95 A"/>
    <property type="chains" value="A=1261-1468"/>
</dbReference>
<dbReference type="PDB" id="1UEX">
    <property type="method" value="X-ray"/>
    <property type="resolution" value="2.85 A"/>
    <property type="chains" value="C=1260-1468"/>
</dbReference>
<dbReference type="PDB" id="2ADF">
    <property type="method" value="X-ray"/>
    <property type="resolution" value="1.90 A"/>
    <property type="chains" value="A=1683-1874"/>
</dbReference>
<dbReference type="PDB" id="2MHP">
    <property type="method" value="NMR"/>
    <property type="chains" value="A=766-864"/>
</dbReference>
<dbReference type="PDB" id="2MHQ">
    <property type="method" value="NMR"/>
    <property type="chains" value="A=766-864"/>
</dbReference>
<dbReference type="PDB" id="3GXB">
    <property type="method" value="X-ray"/>
    <property type="resolution" value="1.90 A"/>
    <property type="chains" value="A/B=1495-1671"/>
</dbReference>
<dbReference type="PDB" id="3HXO">
    <property type="method" value="X-ray"/>
    <property type="resolution" value="2.40 A"/>
    <property type="chains" value="A=1260-1468"/>
</dbReference>
<dbReference type="PDB" id="3HXQ">
    <property type="method" value="X-ray"/>
    <property type="resolution" value="2.69 A"/>
    <property type="chains" value="A=1260-1468"/>
</dbReference>
<dbReference type="PDB" id="3PPV">
    <property type="method" value="X-ray"/>
    <property type="resolution" value="1.90 A"/>
    <property type="chains" value="A=1488-1674"/>
</dbReference>
<dbReference type="PDB" id="3PPW">
    <property type="method" value="X-ray"/>
    <property type="resolution" value="1.90 A"/>
    <property type="chains" value="A=1488-1674"/>
</dbReference>
<dbReference type="PDB" id="3PPX">
    <property type="method" value="X-ray"/>
    <property type="resolution" value="1.91 A"/>
    <property type="chains" value="A=1488-1674"/>
</dbReference>
<dbReference type="PDB" id="3PPY">
    <property type="method" value="X-ray"/>
    <property type="resolution" value="2.00 A"/>
    <property type="chains" value="A=1488-1674"/>
</dbReference>
<dbReference type="PDB" id="3ZQK">
    <property type="method" value="X-ray"/>
    <property type="resolution" value="1.70 A"/>
    <property type="chains" value="A/B/C=1478-1674"/>
</dbReference>
<dbReference type="PDB" id="4C29">
    <property type="method" value="X-ray"/>
    <property type="resolution" value="2.20 A"/>
    <property type="chains" value="A/B=1264-1471"/>
</dbReference>
<dbReference type="PDB" id="4C2A">
    <property type="method" value="X-ray"/>
    <property type="resolution" value="2.08 A"/>
    <property type="chains" value="A=1264-1471"/>
</dbReference>
<dbReference type="PDB" id="4C2B">
    <property type="method" value="X-ray"/>
    <property type="resolution" value="2.80 A"/>
    <property type="chains" value="A/C/E/G=1264-1471"/>
</dbReference>
<dbReference type="PDB" id="4DMU">
    <property type="method" value="X-ray"/>
    <property type="resolution" value="2.80 A"/>
    <property type="chains" value="B/D/F/H/J/L=1683-1874"/>
</dbReference>
<dbReference type="PDB" id="4NT5">
    <property type="method" value="X-ray"/>
    <property type="resolution" value="3.28 A"/>
    <property type="chains" value="A=2721-2813"/>
</dbReference>
<dbReference type="PDB" id="5BV8">
    <property type="method" value="X-ray"/>
    <property type="resolution" value="1.59 A"/>
    <property type="chains" value="A=1238-1471"/>
</dbReference>
<dbReference type="PDB" id="6FWN">
    <property type="method" value="NMR"/>
    <property type="chains" value="A=2497-2577"/>
</dbReference>
<dbReference type="PDB" id="6N29">
    <property type="method" value="X-ray"/>
    <property type="resolution" value="2.50 A"/>
    <property type="chains" value="A/B=764-1244"/>
</dbReference>
<dbReference type="PDB" id="7EOW">
    <property type="method" value="X-ray"/>
    <property type="resolution" value="1.60 A"/>
    <property type="chains" value="A=1261-1468"/>
</dbReference>
<dbReference type="PDB" id="7F49">
    <property type="method" value="X-ray"/>
    <property type="resolution" value="2.09 A"/>
    <property type="chains" value="A=1259-1468"/>
</dbReference>
<dbReference type="PDB" id="7KWO">
    <property type="method" value="EM"/>
    <property type="resolution" value="2.90 A"/>
    <property type="chains" value="V=1-1256"/>
</dbReference>
<dbReference type="PDB" id="7P4N">
    <property type="method" value="NMR"/>
    <property type="chains" value="A=2647-2720"/>
</dbReference>
<dbReference type="PDB" id="7PMV">
    <property type="method" value="EM"/>
    <property type="resolution" value="3.70 A"/>
    <property type="chains" value="A/B/D/E=1-1241"/>
</dbReference>
<dbReference type="PDB" id="7PNF">
    <property type="method" value="EM"/>
    <property type="resolution" value="4.35 A"/>
    <property type="chains" value="B/D=1-1241"/>
</dbReference>
<dbReference type="PDB" id="7ZWH">
    <property type="method" value="EM"/>
    <property type="resolution" value="3.20 A"/>
    <property type="chains" value="D/E=1-1197, G/H=1265-1463"/>
</dbReference>
<dbReference type="PDB" id="8D3C">
    <property type="method" value="EM"/>
    <property type="resolution" value="3.10 A"/>
    <property type="chains" value="A/B/C/D/E/F/G/H/I/J/K/L/M/N/O/P=1-1464"/>
</dbReference>
<dbReference type="PDB" id="8D3D">
    <property type="method" value="EM"/>
    <property type="resolution" value="3.20 A"/>
    <property type="chains" value="A/B/C/D/E/F/G/H/I/J/K/L/M/N/O/P=1-1464"/>
</dbReference>
<dbReference type="PDBsum" id="1AO3"/>
<dbReference type="PDBsum" id="1ATZ"/>
<dbReference type="PDBsum" id="1AUQ"/>
<dbReference type="PDBsum" id="1FE8"/>
<dbReference type="PDBsum" id="1FNS"/>
<dbReference type="PDBsum" id="1IJB"/>
<dbReference type="PDBsum" id="1IJK"/>
<dbReference type="PDBsum" id="1M10"/>
<dbReference type="PDBsum" id="1OAK"/>
<dbReference type="PDBsum" id="1SQ0"/>
<dbReference type="PDBsum" id="1U0N"/>
<dbReference type="PDBsum" id="1UEX"/>
<dbReference type="PDBsum" id="2ADF"/>
<dbReference type="PDBsum" id="2MHP"/>
<dbReference type="PDBsum" id="2MHQ"/>
<dbReference type="PDBsum" id="3GXB"/>
<dbReference type="PDBsum" id="3HXO"/>
<dbReference type="PDBsum" id="3HXQ"/>
<dbReference type="PDBsum" id="3PPV"/>
<dbReference type="PDBsum" id="3PPW"/>
<dbReference type="PDBsum" id="3PPX"/>
<dbReference type="PDBsum" id="3PPY"/>
<dbReference type="PDBsum" id="3ZQK"/>
<dbReference type="PDBsum" id="4C29"/>
<dbReference type="PDBsum" id="4C2A"/>
<dbReference type="PDBsum" id="4C2B"/>
<dbReference type="PDBsum" id="4DMU"/>
<dbReference type="PDBsum" id="4NT5"/>
<dbReference type="PDBsum" id="5BV8"/>
<dbReference type="PDBsum" id="6FWN"/>
<dbReference type="PDBsum" id="6N29"/>
<dbReference type="PDBsum" id="7EOW"/>
<dbReference type="PDBsum" id="7F49"/>
<dbReference type="PDBsum" id="7KWO"/>
<dbReference type="PDBsum" id="7P4N"/>
<dbReference type="PDBsum" id="7PMV"/>
<dbReference type="PDBsum" id="7PNF"/>
<dbReference type="PDBsum" id="7ZWH"/>
<dbReference type="PDBsum" id="8D3C"/>
<dbReference type="PDBsum" id="8D3D"/>
<dbReference type="EMDB" id="EMD-13541"/>
<dbReference type="EMDB" id="EMD-13547"/>
<dbReference type="EMDB" id="EMD-14998"/>
<dbReference type="EMDB" id="EMD-23057"/>
<dbReference type="EMDB" id="EMD-27156"/>
<dbReference type="EMDB" id="EMD-27157"/>
<dbReference type="EMDB" id="EMD-27158"/>
<dbReference type="EMDB" id="EMD-32620"/>
<dbReference type="EMDB" id="EMD-32621"/>
<dbReference type="EMDB" id="EMD-32622"/>
<dbReference type="EMDB" id="EMD-32687"/>
<dbReference type="EMDB" id="EMD-32688"/>
<dbReference type="EMDB" id="EMD-32689"/>
<dbReference type="EMDB" id="EMD-32690"/>
<dbReference type="EMDB" id="EMD-32713"/>
<dbReference type="SASBDB" id="P04275"/>
<dbReference type="SMR" id="P04275"/>
<dbReference type="BioGRID" id="113289">
    <property type="interactions" value="35"/>
</dbReference>
<dbReference type="CORUM" id="P04275"/>
<dbReference type="DIP" id="DIP-29667N"/>
<dbReference type="ELM" id="P04275"/>
<dbReference type="FunCoup" id="P04275">
    <property type="interactions" value="601"/>
</dbReference>
<dbReference type="IntAct" id="P04275">
    <property type="interactions" value="64"/>
</dbReference>
<dbReference type="MINT" id="P04275"/>
<dbReference type="STRING" id="9606.ENSP00000261405"/>
<dbReference type="ChEMBL" id="CHEMBL2021748"/>
<dbReference type="DrugBank" id="DB09329">
    <property type="generic name" value="Antihemophilic factor (recombinant), PEGylated"/>
</dbReference>
<dbReference type="DrugBank" id="DB00025">
    <property type="generic name" value="Antihemophilic factor, human recombinant"/>
</dbReference>
<dbReference type="DrugBank" id="DB15164">
    <property type="generic name" value="Apadamtase alfa"/>
</dbReference>
<dbReference type="DrugBank" id="DB06081">
    <property type="generic name" value="Caplacizumab"/>
</dbReference>
<dbReference type="DrugBank" id="DB11607">
    <property type="generic name" value="Efmoroctocog alfa"/>
</dbReference>
<dbReference type="DrugBank" id="DB05202">
    <property type="generic name" value="Egaptivon pegol"/>
</dbReference>
<dbReference type="DrugBank" id="DB13998">
    <property type="generic name" value="Lonoctocog alfa"/>
</dbReference>
<dbReference type="DrugBank" id="DB13999">
    <property type="generic name" value="Moroctocog alfa"/>
</dbReference>
<dbReference type="DrugBank" id="DB16007">
    <property type="generic name" value="Rurioctocog alfa pegol"/>
</dbReference>
<dbReference type="DrugBank" id="DB09108">
    <property type="generic name" value="Simoctocog alfa"/>
</dbReference>
<dbReference type="DrugBank" id="DB11606">
    <property type="generic name" value="Susoctocog alfa"/>
</dbReference>
<dbReference type="DrugBank" id="DB14738">
    <property type="generic name" value="Turoctocog alfa pegol"/>
</dbReference>
<dbReference type="DrugCentral" id="P04275"/>
<dbReference type="MEROPS" id="I08.950"/>
<dbReference type="MEROPS" id="I08.954"/>
<dbReference type="GlyConnect" id="627">
    <property type="glycosylation" value="72 N-Linked glycans (12 sites), 2 O-Linked glycans"/>
</dbReference>
<dbReference type="GlyCosmos" id="P04275">
    <property type="glycosylation" value="28 sites, 120 glycans"/>
</dbReference>
<dbReference type="GlyGen" id="P04275">
    <property type="glycosylation" value="37 sites, 193 N-linked glycans (15 sites), 10 O-linked glycans (8 sites)"/>
</dbReference>
<dbReference type="iPTMnet" id="P04275"/>
<dbReference type="MetOSite" id="P04275"/>
<dbReference type="PhosphoSitePlus" id="P04275"/>
<dbReference type="SwissPalm" id="P04275"/>
<dbReference type="BioMuta" id="VWF"/>
<dbReference type="DMDM" id="317373549"/>
<dbReference type="jPOST" id="P04275"/>
<dbReference type="MassIVE" id="P04275"/>
<dbReference type="PaxDb" id="9606-ENSP00000261405"/>
<dbReference type="PeptideAtlas" id="P04275"/>
<dbReference type="ProteomicsDB" id="51696">
    <molecule id="P04275-1"/>
</dbReference>
<dbReference type="ProteomicsDB" id="74127"/>
<dbReference type="ABCD" id="P04275">
    <property type="antibodies" value="56 sequenced antibodies"/>
</dbReference>
<dbReference type="Antibodypedia" id="789">
    <property type="antibodies" value="2150 antibodies from 53 providers"/>
</dbReference>
<dbReference type="DNASU" id="7450"/>
<dbReference type="Ensembl" id="ENST00000261405.10">
    <molecule id="P04275-1"/>
    <property type="protein sequence ID" value="ENSP00000261405.5"/>
    <property type="gene ID" value="ENSG00000110799.14"/>
</dbReference>
<dbReference type="GeneID" id="7450"/>
<dbReference type="KEGG" id="hsa:7450"/>
<dbReference type="MANE-Select" id="ENST00000261405.10">
    <property type="protein sequence ID" value="ENSP00000261405.5"/>
    <property type="RefSeq nucleotide sequence ID" value="NM_000552.5"/>
    <property type="RefSeq protein sequence ID" value="NP_000543.3"/>
</dbReference>
<dbReference type="UCSC" id="uc001qnn.2">
    <molecule id="P04275-1"/>
    <property type="organism name" value="human"/>
</dbReference>
<dbReference type="AGR" id="HGNC:12726"/>
<dbReference type="CTD" id="7450"/>
<dbReference type="DisGeNET" id="7450"/>
<dbReference type="GeneCards" id="VWF"/>
<dbReference type="GeneReviews" id="VWF"/>
<dbReference type="HGNC" id="HGNC:12726">
    <property type="gene designation" value="VWF"/>
</dbReference>
<dbReference type="HPA" id="ENSG00000110799">
    <property type="expression patterns" value="Low tissue specificity"/>
</dbReference>
<dbReference type="MalaCards" id="VWF"/>
<dbReference type="MIM" id="193400">
    <property type="type" value="phenotype"/>
</dbReference>
<dbReference type="MIM" id="277480">
    <property type="type" value="phenotype"/>
</dbReference>
<dbReference type="MIM" id="613160">
    <property type="type" value="gene"/>
</dbReference>
<dbReference type="MIM" id="613554">
    <property type="type" value="phenotype"/>
</dbReference>
<dbReference type="neXtProt" id="NX_P04275"/>
<dbReference type="OpenTargets" id="ENSG00000110799"/>
<dbReference type="Orphanet" id="166078">
    <property type="disease" value="Von Willebrand disease type 1"/>
</dbReference>
<dbReference type="Orphanet" id="166084">
    <property type="disease" value="Von Willebrand disease type 2A"/>
</dbReference>
<dbReference type="Orphanet" id="166087">
    <property type="disease" value="Von Willebrand disease type 2B"/>
</dbReference>
<dbReference type="Orphanet" id="166090">
    <property type="disease" value="Von Willebrand disease type 2M"/>
</dbReference>
<dbReference type="Orphanet" id="166093">
    <property type="disease" value="Von Willebrand disease type 2N"/>
</dbReference>
<dbReference type="Orphanet" id="166096">
    <property type="disease" value="Von Willebrand disease type 3"/>
</dbReference>
<dbReference type="PharmGKB" id="PA37337"/>
<dbReference type="VEuPathDB" id="HostDB:ENSG00000110799"/>
<dbReference type="eggNOG" id="KOG1216">
    <property type="taxonomic scope" value="Eukaryota"/>
</dbReference>
<dbReference type="GeneTree" id="ENSGT00940000155810"/>
<dbReference type="HOGENOM" id="CLU_000076_5_0_1"/>
<dbReference type="InParanoid" id="P04275"/>
<dbReference type="OMA" id="KFEACHH"/>
<dbReference type="OrthoDB" id="6262482at2759"/>
<dbReference type="PAN-GO" id="P04275">
    <property type="GO annotations" value="4 GO annotations based on evolutionary models"/>
</dbReference>
<dbReference type="PhylomeDB" id="P04275"/>
<dbReference type="TreeFam" id="TF300299"/>
<dbReference type="BioCyc" id="MetaCyc:ENSG00000110799-MONOMER"/>
<dbReference type="PathwayCommons" id="P04275"/>
<dbReference type="Reactome" id="R-HSA-114608">
    <property type="pathway name" value="Platelet degranulation"/>
</dbReference>
<dbReference type="Reactome" id="R-HSA-140837">
    <property type="pathway name" value="Intrinsic Pathway of Fibrin Clot Formation"/>
</dbReference>
<dbReference type="Reactome" id="R-HSA-216083">
    <property type="pathway name" value="Integrin cell surface interactions"/>
</dbReference>
<dbReference type="Reactome" id="R-HSA-354192">
    <property type="pathway name" value="Integrin signaling"/>
</dbReference>
<dbReference type="Reactome" id="R-HSA-354194">
    <property type="pathway name" value="GRB2:SOS provides linkage to MAPK signaling for Integrins"/>
</dbReference>
<dbReference type="Reactome" id="R-HSA-372708">
    <property type="pathway name" value="p130Cas linkage to MAPK signaling for integrins"/>
</dbReference>
<dbReference type="Reactome" id="R-HSA-430116">
    <property type="pathway name" value="GP1b-IX-V activation signalling"/>
</dbReference>
<dbReference type="Reactome" id="R-HSA-5674135">
    <property type="pathway name" value="MAP2K and MAPK activation"/>
</dbReference>
<dbReference type="Reactome" id="R-HSA-6802946">
    <property type="pathway name" value="Signaling by moderate kinase activity BRAF mutants"/>
</dbReference>
<dbReference type="Reactome" id="R-HSA-6802948">
    <property type="pathway name" value="Signaling by high-kinase activity BRAF mutants"/>
</dbReference>
<dbReference type="Reactome" id="R-HSA-6802952">
    <property type="pathway name" value="Signaling by BRAF and RAF1 fusions"/>
</dbReference>
<dbReference type="Reactome" id="R-HSA-6802955">
    <property type="pathway name" value="Paradoxical activation of RAF signaling by kinase inactive BRAF"/>
</dbReference>
<dbReference type="Reactome" id="R-HSA-75892">
    <property type="pathway name" value="Platelet Adhesion to exposed collagen"/>
</dbReference>
<dbReference type="Reactome" id="R-HSA-76009">
    <property type="pathway name" value="Platelet Aggregation (Plug Formation)"/>
</dbReference>
<dbReference type="Reactome" id="R-HSA-9649948">
    <property type="pathway name" value="Signaling downstream of RAS mutants"/>
</dbReference>
<dbReference type="Reactome" id="R-HSA-9656223">
    <property type="pathway name" value="Signaling by RAF1 mutants"/>
</dbReference>
<dbReference type="Reactome" id="R-HSA-9672391">
    <property type="pathway name" value="Defective F8 cleavage by thrombin"/>
</dbReference>
<dbReference type="Reactome" id="R-HSA-9672393">
    <property type="pathway name" value="Defective F8 binding to von Willebrand factor"/>
</dbReference>
<dbReference type="Reactome" id="R-HSA-9845619">
    <property type="pathway name" value="Enhanced cleavage of VWF variant by ADAMTS13"/>
</dbReference>
<dbReference type="Reactome" id="R-HSA-9845620">
    <property type="pathway name" value="Enhanced binding of GP1BA variant to VWF multimer:collagen"/>
</dbReference>
<dbReference type="Reactome" id="R-HSA-9845621">
    <property type="pathway name" value="Defective VWF cleavage by ADAMTS13 variant"/>
</dbReference>
<dbReference type="Reactome" id="R-HSA-9845622">
    <property type="pathway name" value="Defective VWF binding to collagen type I"/>
</dbReference>
<dbReference type="Reactome" id="R-HSA-9846298">
    <property type="pathway name" value="Defective binding of VWF variant to GPIb:IX:V"/>
</dbReference>
<dbReference type="SignaLink" id="P04275"/>
<dbReference type="SIGNOR" id="P04275"/>
<dbReference type="BioGRID-ORCS" id="7450">
    <property type="hits" value="10 hits in 1161 CRISPR screens"/>
</dbReference>
<dbReference type="ChiTaRS" id="VWF">
    <property type="organism name" value="human"/>
</dbReference>
<dbReference type="EvolutionaryTrace" id="P04275"/>
<dbReference type="GeneWiki" id="Von_Willebrand_factor"/>
<dbReference type="GenomeRNAi" id="7450"/>
<dbReference type="Pharos" id="P04275">
    <property type="development level" value="Tclin"/>
</dbReference>
<dbReference type="PRO" id="PR:P04275"/>
<dbReference type="Proteomes" id="UP000005640">
    <property type="component" value="Chromosome 12"/>
</dbReference>
<dbReference type="RNAct" id="P04275">
    <property type="molecule type" value="protein"/>
</dbReference>
<dbReference type="Bgee" id="ENSG00000110799">
    <property type="expression patterns" value="Expressed in urethra and 196 other cell types or tissues"/>
</dbReference>
<dbReference type="ExpressionAtlas" id="P04275">
    <property type="expression patterns" value="baseline and differential"/>
</dbReference>
<dbReference type="GO" id="GO:0062023">
    <property type="term" value="C:collagen-containing extracellular matrix"/>
    <property type="evidence" value="ECO:0000314"/>
    <property type="project" value="UniProtKB"/>
</dbReference>
<dbReference type="GO" id="GO:0005783">
    <property type="term" value="C:endoplasmic reticulum"/>
    <property type="evidence" value="ECO:0000314"/>
    <property type="project" value="UniProtKB"/>
</dbReference>
<dbReference type="GO" id="GO:0070062">
    <property type="term" value="C:extracellular exosome"/>
    <property type="evidence" value="ECO:0007005"/>
    <property type="project" value="UniProtKB"/>
</dbReference>
<dbReference type="GO" id="GO:0031012">
    <property type="term" value="C:extracellular matrix"/>
    <property type="evidence" value="ECO:0000318"/>
    <property type="project" value="GO_Central"/>
</dbReference>
<dbReference type="GO" id="GO:0005576">
    <property type="term" value="C:extracellular region"/>
    <property type="evidence" value="ECO:0000314"/>
    <property type="project" value="UniProtKB"/>
</dbReference>
<dbReference type="GO" id="GO:0005615">
    <property type="term" value="C:extracellular space"/>
    <property type="evidence" value="ECO:0000318"/>
    <property type="project" value="GO_Central"/>
</dbReference>
<dbReference type="GO" id="GO:0031091">
    <property type="term" value="C:platelet alpha granule"/>
    <property type="evidence" value="ECO:0000303"/>
    <property type="project" value="UniProtKB"/>
</dbReference>
<dbReference type="GO" id="GO:0031093">
    <property type="term" value="C:platelet alpha granule lumen"/>
    <property type="evidence" value="ECO:0000304"/>
    <property type="project" value="Reactome"/>
</dbReference>
<dbReference type="GO" id="GO:0033093">
    <property type="term" value="C:Weibel-Palade body"/>
    <property type="evidence" value="ECO:0000314"/>
    <property type="project" value="UniProtKB"/>
</dbReference>
<dbReference type="GO" id="GO:0005518">
    <property type="term" value="F:collagen binding"/>
    <property type="evidence" value="ECO:0000314"/>
    <property type="project" value="UniProtKB"/>
</dbReference>
<dbReference type="GO" id="GO:0042802">
    <property type="term" value="F:identical protein binding"/>
    <property type="evidence" value="ECO:0000353"/>
    <property type="project" value="UniProtKB"/>
</dbReference>
<dbReference type="GO" id="GO:0019865">
    <property type="term" value="F:immunoglobulin binding"/>
    <property type="evidence" value="ECO:0000314"/>
    <property type="project" value="UniProtKB"/>
</dbReference>
<dbReference type="GO" id="GO:0005178">
    <property type="term" value="F:integrin binding"/>
    <property type="evidence" value="ECO:0000353"/>
    <property type="project" value="UniProtKB"/>
</dbReference>
<dbReference type="GO" id="GO:0002020">
    <property type="term" value="F:protease binding"/>
    <property type="evidence" value="ECO:0000314"/>
    <property type="project" value="MGI"/>
</dbReference>
<dbReference type="GO" id="GO:0051087">
    <property type="term" value="F:protein-folding chaperone binding"/>
    <property type="evidence" value="ECO:0000314"/>
    <property type="project" value="UniProtKB"/>
</dbReference>
<dbReference type="GO" id="GO:0007596">
    <property type="term" value="P:blood coagulation"/>
    <property type="evidence" value="ECO:0000315"/>
    <property type="project" value="UniProtKB"/>
</dbReference>
<dbReference type="GO" id="GO:0007155">
    <property type="term" value="P:cell adhesion"/>
    <property type="evidence" value="ECO:0000314"/>
    <property type="project" value="UniProtKB"/>
</dbReference>
<dbReference type="GO" id="GO:0031589">
    <property type="term" value="P:cell-substrate adhesion"/>
    <property type="evidence" value="ECO:0000314"/>
    <property type="project" value="UniProtKB"/>
</dbReference>
<dbReference type="GO" id="GO:0007599">
    <property type="term" value="P:hemostasis"/>
    <property type="evidence" value="ECO:0000315"/>
    <property type="project" value="UniProtKB"/>
</dbReference>
<dbReference type="GO" id="GO:0030168">
    <property type="term" value="P:platelet activation"/>
    <property type="evidence" value="ECO:0000314"/>
    <property type="project" value="UniProtKB"/>
</dbReference>
<dbReference type="GO" id="GO:1902533">
    <property type="term" value="P:positive regulation of intracellular signal transduction"/>
    <property type="evidence" value="ECO:0000314"/>
    <property type="project" value="ARUK-UCL"/>
</dbReference>
<dbReference type="GO" id="GO:0009611">
    <property type="term" value="P:response to wounding"/>
    <property type="evidence" value="ECO:0000304"/>
    <property type="project" value="UniProtKB"/>
</dbReference>
<dbReference type="CDD" id="cd19941">
    <property type="entry name" value="TIL"/>
    <property type="match status" value="5"/>
</dbReference>
<dbReference type="CDD" id="cd01450">
    <property type="entry name" value="vWFA_subfamily_ECM"/>
    <property type="match status" value="3"/>
</dbReference>
<dbReference type="DisProt" id="DP02981"/>
<dbReference type="FunFam" id="2.10.25.10:FF:000674">
    <property type="entry name" value="Mucin-2"/>
    <property type="match status" value="1"/>
</dbReference>
<dbReference type="FunFam" id="2.10.25.10:FF:000284">
    <property type="entry name" value="von Willebrand factor"/>
    <property type="match status" value="1"/>
</dbReference>
<dbReference type="FunFam" id="2.10.25.10:FF:000444">
    <property type="entry name" value="von Willebrand factor"/>
    <property type="match status" value="1"/>
</dbReference>
<dbReference type="FunFam" id="2.10.25.10:FF:000493">
    <property type="entry name" value="von Willebrand factor"/>
    <property type="match status" value="1"/>
</dbReference>
<dbReference type="FunFam" id="3.40.50.410:FF:000053">
    <property type="entry name" value="von Willebrand factor"/>
    <property type="match status" value="1"/>
</dbReference>
<dbReference type="FunFam" id="3.40.50.410:FF:000061">
    <property type="entry name" value="von Willebrand factor"/>
    <property type="match status" value="1"/>
</dbReference>
<dbReference type="FunFam" id="3.40.50.410:FF:000063">
    <property type="entry name" value="von Willebrand factor"/>
    <property type="match status" value="1"/>
</dbReference>
<dbReference type="Gene3D" id="2.10.25.10">
    <property type="entry name" value="Laminin"/>
    <property type="match status" value="5"/>
</dbReference>
<dbReference type="Gene3D" id="3.40.50.410">
    <property type="entry name" value="von Willebrand factor, type A domain"/>
    <property type="match status" value="3"/>
</dbReference>
<dbReference type="InterPro" id="IPR006207">
    <property type="entry name" value="Cys_knot_C"/>
</dbReference>
<dbReference type="InterPro" id="IPR050780">
    <property type="entry name" value="Mucin_vWF_Thrombospondin_sf"/>
</dbReference>
<dbReference type="InterPro" id="IPR036084">
    <property type="entry name" value="Ser_inhib-like_sf"/>
</dbReference>
<dbReference type="InterPro" id="IPR002919">
    <property type="entry name" value="TIL_dom"/>
</dbReference>
<dbReference type="InterPro" id="IPR037578">
    <property type="entry name" value="Von_Willebrand_factor"/>
</dbReference>
<dbReference type="InterPro" id="IPR032361">
    <property type="entry name" value="VWA_N2"/>
</dbReference>
<dbReference type="InterPro" id="IPR014853">
    <property type="entry name" value="VWF/SSPO/ZAN-like_Cys-rich_dom"/>
</dbReference>
<dbReference type="InterPro" id="IPR002035">
    <property type="entry name" value="VWF_A"/>
</dbReference>
<dbReference type="InterPro" id="IPR001007">
    <property type="entry name" value="VWF_dom"/>
</dbReference>
<dbReference type="InterPro" id="IPR001846">
    <property type="entry name" value="VWF_type-D"/>
</dbReference>
<dbReference type="InterPro" id="IPR036465">
    <property type="entry name" value="vWFA_dom_sf"/>
</dbReference>
<dbReference type="PANTHER" id="PTHR11339">
    <property type="entry name" value="EXTRACELLULAR MATRIX GLYCOPROTEIN RELATED"/>
    <property type="match status" value="1"/>
</dbReference>
<dbReference type="PANTHER" id="PTHR11339:SF361">
    <property type="entry name" value="VON WILLEBRAND FACTOR"/>
    <property type="match status" value="1"/>
</dbReference>
<dbReference type="Pfam" id="PF08742">
    <property type="entry name" value="C8"/>
    <property type="match status" value="4"/>
</dbReference>
<dbReference type="Pfam" id="PF01826">
    <property type="entry name" value="TIL"/>
    <property type="match status" value="3"/>
</dbReference>
<dbReference type="Pfam" id="PF00092">
    <property type="entry name" value="VWA"/>
    <property type="match status" value="3"/>
</dbReference>
<dbReference type="Pfam" id="PF16164">
    <property type="entry name" value="VWA_N2"/>
    <property type="match status" value="1"/>
</dbReference>
<dbReference type="Pfam" id="PF00093">
    <property type="entry name" value="VWC"/>
    <property type="match status" value="2"/>
</dbReference>
<dbReference type="Pfam" id="PF00094">
    <property type="entry name" value="VWD"/>
    <property type="match status" value="4"/>
</dbReference>
<dbReference type="Pfam" id="PF23244">
    <property type="entry name" value="VWF"/>
    <property type="match status" value="1"/>
</dbReference>
<dbReference type="PIRSF" id="PIRSF002495">
    <property type="entry name" value="VWF"/>
    <property type="match status" value="1"/>
</dbReference>
<dbReference type="PRINTS" id="PR00453">
    <property type="entry name" value="VWFADOMAIN"/>
</dbReference>
<dbReference type="SMART" id="SM00832">
    <property type="entry name" value="C8"/>
    <property type="match status" value="4"/>
</dbReference>
<dbReference type="SMART" id="SM00041">
    <property type="entry name" value="CT"/>
    <property type="match status" value="1"/>
</dbReference>
<dbReference type="SMART" id="SM00327">
    <property type="entry name" value="VWA"/>
    <property type="match status" value="3"/>
</dbReference>
<dbReference type="SMART" id="SM00214">
    <property type="entry name" value="VWC"/>
    <property type="match status" value="5"/>
</dbReference>
<dbReference type="SMART" id="SM00215">
    <property type="entry name" value="VWC_out"/>
    <property type="match status" value="2"/>
</dbReference>
<dbReference type="SMART" id="SM00216">
    <property type="entry name" value="VWD"/>
    <property type="match status" value="4"/>
</dbReference>
<dbReference type="SUPFAM" id="SSF57603">
    <property type="entry name" value="FnI-like domain"/>
    <property type="match status" value="1"/>
</dbReference>
<dbReference type="SUPFAM" id="SSF57567">
    <property type="entry name" value="Serine protease inhibitors"/>
    <property type="match status" value="5"/>
</dbReference>
<dbReference type="SUPFAM" id="SSF53300">
    <property type="entry name" value="vWA-like"/>
    <property type="match status" value="3"/>
</dbReference>
<dbReference type="PROSITE" id="PS01185">
    <property type="entry name" value="CTCK_1"/>
    <property type="match status" value="1"/>
</dbReference>
<dbReference type="PROSITE" id="PS01225">
    <property type="entry name" value="CTCK_2"/>
    <property type="match status" value="1"/>
</dbReference>
<dbReference type="PROSITE" id="PS50234">
    <property type="entry name" value="VWFA"/>
    <property type="match status" value="3"/>
</dbReference>
<dbReference type="PROSITE" id="PS01208">
    <property type="entry name" value="VWFC_1"/>
    <property type="match status" value="3"/>
</dbReference>
<dbReference type="PROSITE" id="PS50184">
    <property type="entry name" value="VWFC_2"/>
    <property type="match status" value="3"/>
</dbReference>
<dbReference type="PROSITE" id="PS51233">
    <property type="entry name" value="VWFD"/>
    <property type="match status" value="4"/>
</dbReference>
<organism>
    <name type="scientific">Homo sapiens</name>
    <name type="common">Human</name>
    <dbReference type="NCBI Taxonomy" id="9606"/>
    <lineage>
        <taxon>Eukaryota</taxon>
        <taxon>Metazoa</taxon>
        <taxon>Chordata</taxon>
        <taxon>Craniata</taxon>
        <taxon>Vertebrata</taxon>
        <taxon>Euteleostomi</taxon>
        <taxon>Mammalia</taxon>
        <taxon>Eutheria</taxon>
        <taxon>Euarchontoglires</taxon>
        <taxon>Primates</taxon>
        <taxon>Haplorrhini</taxon>
        <taxon>Catarrhini</taxon>
        <taxon>Hominidae</taxon>
        <taxon>Homo</taxon>
    </lineage>
</organism>
<feature type="signal peptide" evidence="37">
    <location>
        <begin position="1"/>
        <end position="22"/>
    </location>
</feature>
<feature type="chain" id="PRO_0000022682" description="von Willebrand antigen 2">
    <location>
        <begin position="23"/>
        <end position="763"/>
    </location>
</feature>
<feature type="chain" id="PRO_0000022683" description="von Willebrand factor">
    <location>
        <begin position="764"/>
        <end position="2813"/>
    </location>
</feature>
<feature type="domain" description="VWFD 1" evidence="6">
    <location>
        <begin position="33"/>
        <end position="201"/>
    </location>
</feature>
<feature type="domain" description="TIL 1">
    <location>
        <begin position="295"/>
        <end position="348"/>
    </location>
</feature>
<feature type="domain" description="VWFD 2" evidence="6">
    <location>
        <begin position="386"/>
        <end position="560"/>
    </location>
</feature>
<feature type="domain" description="TIL 2">
    <location>
        <begin position="652"/>
        <end position="707"/>
    </location>
</feature>
<feature type="domain" description="TIL 3">
    <location>
        <begin position="776"/>
        <end position="827"/>
    </location>
</feature>
<feature type="domain" description="VWFD 3" evidence="6">
    <location>
        <begin position="865"/>
        <end position="1032"/>
    </location>
</feature>
<feature type="domain" description="TIL 4">
    <location>
        <begin position="1146"/>
        <end position="1196"/>
    </location>
</feature>
<feature type="domain" description="VWFA 1; binding site for platelet glycoprotein Ib" evidence="4">
    <location>
        <begin position="1277"/>
        <end position="1453"/>
    </location>
</feature>
<feature type="domain" description="VWFA 2" evidence="4">
    <location>
        <begin position="1498"/>
        <end position="1665"/>
    </location>
</feature>
<feature type="domain" description="VWFA 3; main binding site for collagens type I and III" evidence="4">
    <location>
        <begin position="1691"/>
        <end position="1871"/>
    </location>
</feature>
<feature type="domain" description="VWFD 4" evidence="6">
    <location>
        <begin position="1948"/>
        <end position="2124"/>
    </location>
</feature>
<feature type="domain" description="VWFC 1" evidence="5">
    <location>
        <begin position="2255"/>
        <end position="2328"/>
    </location>
</feature>
<feature type="domain" description="VWFC 2" evidence="5">
    <location>
        <begin position="2429"/>
        <end position="2495"/>
    </location>
</feature>
<feature type="domain" description="VWFC 3" evidence="5">
    <location>
        <begin position="2580"/>
        <end position="2645"/>
    </location>
</feature>
<feature type="domain" description="CTCK" evidence="3">
    <location>
        <begin position="2724"/>
        <end position="2812"/>
    </location>
</feature>
<feature type="region of interest" description="Amino-terminal">
    <location>
        <begin position="764"/>
        <end position="787"/>
    </location>
</feature>
<feature type="region of interest" description="E1">
    <location>
        <begin position="788"/>
        <end position="833"/>
    </location>
</feature>
<feature type="region of interest" description="CX">
    <location>
        <begin position="826"/>
        <end position="853"/>
    </location>
</feature>
<feature type="region of interest" description="E2">
    <location>
        <begin position="2216"/>
        <end position="2261"/>
    </location>
</feature>
<feature type="short sequence motif" description="Cell attachment site">
    <location>
        <begin position="2507"/>
        <end position="2509"/>
    </location>
</feature>
<feature type="glycosylation site" description="N-linked (GlcNAc...) asparagine" evidence="2">
    <location>
        <position position="99"/>
    </location>
</feature>
<feature type="glycosylation site" description="N-linked (GlcNAc...) asparagine" evidence="2">
    <location>
        <position position="156"/>
    </location>
</feature>
<feature type="glycosylation site" description="N-linked (GlcNAc...) asparagine" evidence="2">
    <location>
        <position position="211"/>
    </location>
</feature>
<feature type="glycosylation site" description="N-linked (GlcNAc...) asparagine" evidence="2">
    <location>
        <position position="666"/>
    </location>
</feature>
<feature type="glycosylation site" description="N-linked (GlcNAc...) asparagine">
    <location>
        <position position="857"/>
    </location>
</feature>
<feature type="glycosylation site" description="N-linked (GlcNAc...) asparagine; atypical">
    <location>
        <position position="1147"/>
    </location>
</feature>
<feature type="glycosylation site" description="N-linked (GlcNAc...) asparagine">
    <location>
        <position position="1231"/>
    </location>
</feature>
<feature type="glycosylation site" description="O-linked (GalNAc...) threonine" evidence="58">
    <location>
        <position position="1248"/>
    </location>
</feature>
<feature type="glycosylation site" description="O-linked (GalNAc...) threonine" evidence="58">
    <location>
        <position position="1255"/>
    </location>
</feature>
<feature type="glycosylation site" description="O-linked (GalNAc...) threonine" evidence="58">
    <location>
        <position position="1256"/>
    </location>
</feature>
<feature type="glycosylation site" description="O-linked (GalNAc...) serine" evidence="39">
    <location>
        <position position="1263"/>
    </location>
</feature>
<feature type="glycosylation site" description="O-linked (GalNAc...) threonine" evidence="58">
    <location>
        <position position="1468"/>
    </location>
</feature>
<feature type="glycosylation site" description="O-linked (GalNAc...) threonine" evidence="58">
    <location>
        <position position="1477"/>
    </location>
</feature>
<feature type="glycosylation site" description="O-linked (GalNAc...) serine" evidence="58">
    <location>
        <position position="1486"/>
    </location>
</feature>
<feature type="glycosylation site" description="O-linked (GalNAc...) threonine" evidence="58">
    <location>
        <position position="1487"/>
    </location>
</feature>
<feature type="glycosylation site" description="N-linked (GlcNAc...) (complex) asparagine" evidence="16 25">
    <location>
        <position position="1515"/>
    </location>
</feature>
<feature type="glycosylation site" description="N-linked (GlcNAc...) asparagine">
    <location>
        <position position="1574"/>
    </location>
</feature>
<feature type="glycosylation site" description="O-linked (GalNAc...) threonine" evidence="58">
    <location>
        <position position="1679"/>
    </location>
</feature>
<feature type="glycosylation site" description="N-linked (GlcNAc...) asparagine">
    <location>
        <position position="2223"/>
    </location>
</feature>
<feature type="glycosylation site" description="N-linked (GlcNAc...) asparagine">
    <location>
        <position position="2290"/>
    </location>
</feature>
<feature type="glycosylation site" description="O-linked (GalNAc...) threonine" evidence="58">
    <location>
        <position position="2298"/>
    </location>
</feature>
<feature type="glycosylation site" description="N-linked (GlcNAc...) asparagine">
    <location>
        <position position="2357"/>
    </location>
</feature>
<feature type="glycosylation site" description="N-linked (GlcNAc...) asparagine">
    <location>
        <position position="2400"/>
    </location>
</feature>
<feature type="glycosylation site" description="N-linked (GlcNAc...) asparagine" evidence="26">
    <location>
        <position position="2546"/>
    </location>
</feature>
<feature type="glycosylation site" description="N-linked (GlcNAc...) asparagine">
    <location>
        <position position="2585"/>
    </location>
</feature>
<feature type="glycosylation site" description="N-linked (GlcNAc...) asparagine">
    <location>
        <position position="2790"/>
    </location>
</feature>
<feature type="disulfide bond" evidence="6">
    <location>
        <begin position="35"/>
        <end position="162"/>
    </location>
</feature>
<feature type="disulfide bond" evidence="6">
    <location>
        <begin position="57"/>
        <end position="200"/>
    </location>
</feature>
<feature type="disulfide bond" evidence="6">
    <location>
        <begin position="388"/>
        <end position="524"/>
    </location>
</feature>
<feature type="disulfide bond" evidence="6">
    <location>
        <begin position="410"/>
        <end position="559"/>
    </location>
</feature>
<feature type="disulfide bond" evidence="6">
    <location>
        <begin position="432"/>
        <end position="440"/>
    </location>
</feature>
<feature type="disulfide bond" evidence="38">
    <location>
        <begin position="767"/>
        <end position="808"/>
    </location>
</feature>
<feature type="disulfide bond" evidence="38">
    <location>
        <begin position="776"/>
        <end position="804"/>
    </location>
</feature>
<feature type="disulfide bond" evidence="38">
    <location>
        <begin position="810"/>
        <end position="821"/>
    </location>
</feature>
<feature type="disulfide bond" evidence="6 38">
    <location>
        <begin position="867"/>
        <end position="996"/>
    </location>
</feature>
<feature type="disulfide bond" evidence="6 38">
    <location>
        <begin position="889"/>
        <end position="1031"/>
    </location>
</feature>
<feature type="disulfide bond" evidence="6 38">
    <location>
        <begin position="898"/>
        <end position="993"/>
    </location>
</feature>
<feature type="disulfide bond" evidence="6 38">
    <location>
        <begin position="914"/>
        <end position="921"/>
    </location>
</feature>
<feature type="disulfide bond" evidence="38">
    <location>
        <begin position="1060"/>
        <end position="1084"/>
    </location>
</feature>
<feature type="disulfide bond" evidence="38">
    <location>
        <begin position="1071"/>
        <end position="1111"/>
    </location>
</feature>
<feature type="disulfide bond" evidence="38">
    <location>
        <begin position="1089"/>
        <end position="1091"/>
    </location>
</feature>
<feature type="disulfide bond" evidence="38">
    <location>
        <begin position="1126"/>
        <end position="1130"/>
    </location>
</feature>
<feature type="disulfide bond" evidence="38">
    <location>
        <begin position="1149"/>
        <end position="1169"/>
    </location>
</feature>
<feature type="disulfide bond" evidence="38">
    <location>
        <begin position="1153"/>
        <end position="1165"/>
    </location>
</feature>
<feature type="disulfide bond" evidence="38">
    <location>
        <begin position="1196"/>
        <end position="1199"/>
    </location>
</feature>
<feature type="disulfide bond" evidence="38">
    <location>
        <begin position="1234"/>
        <end position="1237"/>
    </location>
</feature>
<feature type="disulfide bond" evidence="38">
    <location>
        <begin position="1272"/>
        <end position="1458"/>
    </location>
</feature>
<feature type="disulfide bond" evidence="38">
    <location>
        <begin position="1669"/>
        <end position="1670"/>
    </location>
</feature>
<feature type="disulfide bond" evidence="38">
    <location>
        <begin position="1686"/>
        <end position="1872"/>
    </location>
</feature>
<feature type="disulfide bond" evidence="38">
    <location>
        <begin position="1879"/>
        <end position="1904"/>
    </location>
</feature>
<feature type="disulfide bond" description="Or C-1899 with C-1942" evidence="3 6 38">
    <location>
        <begin position="1899"/>
        <end position="1940"/>
    </location>
</feature>
<feature type="disulfide bond" evidence="38">
    <location>
        <begin position="1927"/>
        <end position="2088"/>
    </location>
</feature>
<feature type="disulfide bond" evidence="6 38">
    <location>
        <begin position="1950"/>
        <end position="2085"/>
    </location>
</feature>
<feature type="disulfide bond" evidence="6 38">
    <location>
        <begin position="1972"/>
        <end position="2123"/>
    </location>
</feature>
<feature type="disulfide bond" evidence="6 38">
    <location>
        <begin position="1993"/>
        <end position="2001"/>
    </location>
</feature>
<feature type="disulfide bond" evidence="1">
    <location>
        <begin position="2724"/>
        <end position="2774"/>
    </location>
</feature>
<feature type="disulfide bond" evidence="1">
    <location>
        <begin position="2739"/>
        <end position="2788"/>
    </location>
</feature>
<feature type="disulfide bond" evidence="1">
    <location>
        <begin position="2750"/>
        <end position="2804"/>
    </location>
</feature>
<feature type="disulfide bond" evidence="1">
    <location>
        <begin position="2754"/>
        <end position="2806"/>
    </location>
</feature>
<feature type="disulfide bond" evidence="1">
    <location>
        <begin status="unknown"/>
        <end position="2811"/>
    </location>
</feature>
<feature type="splice variant" id="VSP_056527" description="In isoform 2." evidence="57">
    <original>MIPARFAGVLLALALILP</original>
    <variation>MGAQDEEEGIQDLDGLLVFDKIVEVTLLNLPWYNEETEGQRGEMTAPKSPRAKIR</variation>
    <location>
        <begin position="1"/>
        <end position="18"/>
    </location>
</feature>
<feature type="splice variant" id="VSP_056528" description="In isoform 2." evidence="57">
    <original>GLWEQCQLLKSTSVFARCHPLVDPEPFVALCEKTLCECAGGLECACPALLEYARTCAQEGMVLYGWTDHSACSPVCPAGMEYRQCVSPCARTCQS</original>
    <variation>EEPECNDITARLQYVKVGSCKSEVEVDIHYCQGKCASKAMYSIDINDVQDQCSCCSPTRTEPMQVALHCTNGSVVYHEVLNAMECKCSPRKCSKI</variation>
    <location>
        <begin position="220"/>
        <end position="314"/>
    </location>
</feature>
<feature type="splice variant" id="VSP_056529" description="In isoform 2." evidence="57">
    <location>
        <begin position="315"/>
        <end position="2813"/>
    </location>
</feature>
<feature type="sequence variant" id="VAR_010242" description="In VWD1 and VWD3; defect in secretion and formation of multimers; dbSNP:rs61753997." evidence="7">
    <original>R</original>
    <variation>W</variation>
    <location>
        <position position="273"/>
    </location>
</feature>
<feature type="sequence variant" id="VAR_057023" description="In dbSNP:rs1800387.">
    <original>N</original>
    <variation>K</variation>
    <location>
        <position position="318"/>
    </location>
</feature>
<feature type="sequence variant" id="VAR_005782" description="In VWD3; dbSNP:rs62643626." evidence="43">
    <original>W</original>
    <variation>C</variation>
    <location>
        <position position="377"/>
    </location>
</feature>
<feature type="sequence variant" id="VAR_060591" description="In dbSNP:rs1800377." evidence="31">
    <original>V</original>
    <variation>I</variation>
    <location>
        <position position="471"/>
    </location>
</feature>
<feature type="sequence variant" id="VAR_024553" description="In dbSNP:rs1800378." evidence="34">
    <original>H</original>
    <variation>R</variation>
    <location>
        <position position="484"/>
    </location>
</feature>
<feature type="sequence variant" id="VAR_005783" description="In VWD2; dbSNP:rs61754010." evidence="44">
    <original>N</original>
    <variation>S</variation>
    <location>
        <position position="528"/>
    </location>
</feature>
<feature type="sequence variant" id="VAR_005784" description="In VWD2; dbSNP:rs61754011." evidence="42">
    <original>G</original>
    <variation>R</variation>
    <location>
        <position position="550"/>
    </location>
</feature>
<feature type="sequence variant" id="VAR_057024" description="In dbSNP:rs2228317.">
    <original>M</original>
    <variation>I</variation>
    <location>
        <position position="740"/>
    </location>
</feature>
<feature type="sequence variant" id="VAR_009141" description="In VWD2; dbSNP:rs61748476.">
    <original>C</original>
    <variation>Y</variation>
    <location>
        <position position="788"/>
    </location>
</feature>
<feature type="sequence variant" id="VAR_005785" description="In dbSNP:rs1063856." evidence="33">
    <original>T</original>
    <variation>A</variation>
    <location>
        <position position="789"/>
    </location>
</feature>
<feature type="sequence variant" id="VAR_005786" description="In VWD2; Normandy type; dbSNP:rs61748477." evidence="24">
    <original>T</original>
    <variation>M</variation>
    <location>
        <position position="791"/>
    </location>
</feature>
<feature type="sequence variant" id="VAR_005787" description="In VWD2; Normandy type; dbSNP:rs121964894." evidence="23">
    <original>R</original>
    <variation>W</variation>
    <location>
        <position position="816"/>
    </location>
</feature>
<feature type="sequence variant" id="VAR_005788" description="In dbSNP:rs216321." evidence="31 33 34 35 36 39">
    <original>Q</original>
    <variation>R</variation>
    <location>
        <position position="852"/>
    </location>
</feature>
<feature type="sequence variant" id="VAR_005789" description="In VWD2; Normandy type; dbSNP:rs41276738." evidence="23">
    <original>R</original>
    <variation>Q</variation>
    <location>
        <position position="854"/>
    </location>
</feature>
<feature type="sequence variant" id="VAR_005790">
    <original>N</original>
    <variation>D</variation>
    <location>
        <position position="857"/>
    </location>
</feature>
<feature type="sequence variant" id="VAR_057025" description="In dbSNP:rs11064002.">
    <original>F</original>
    <variation>S</variation>
    <location>
        <position position="885"/>
    </location>
</feature>
<feature type="sequence variant" id="VAR_028446" description="In VWD2; dbSNP:rs61748497." evidence="10">
    <original>C</original>
    <variation>R</variation>
    <location>
        <position position="1060"/>
    </location>
</feature>
<feature type="sequence variant" id="VAR_064925" description="In VWD1; reduced secretion of homodimers and heterodimers with wild type VWD and increased degradation by the proteasome; dbSNP:rs61748511." evidence="9">
    <original>C</original>
    <variation>R</variation>
    <location>
        <position position="1149"/>
    </location>
</feature>
<feature type="sequence variant" id="VAR_005791" description="In VWD2; dbSNP:rs61749370." evidence="52">
    <original>P</original>
    <variation>L</variation>
    <location>
        <position position="1266"/>
    </location>
</feature>
<feature type="sequence variant" id="VAR_005792" description="In VWD2; dbSNP:rs61749371." evidence="50">
    <original>H</original>
    <variation>D</variation>
    <location>
        <position position="1268"/>
    </location>
</feature>
<feature type="sequence variant" id="VAR_067340" description="In VWD2; subtype 2A; dbSNP:rs63524161." evidence="30">
    <original>C</original>
    <variation>F</variation>
    <location>
        <position position="1272"/>
    </location>
</feature>
<feature type="sequence variant" id="VAR_005793" description="In VWD2; dbSNP:rs61749372." evidence="13">
    <original>C</original>
    <variation>R</variation>
    <location>
        <position position="1272"/>
    </location>
</feature>
<feature type="sequence variant" id="VAR_005794" description="In VWD2; dbSNP:rs61749384." evidence="12 14 18 28">
    <original>R</original>
    <variation>W</variation>
    <location>
        <position position="1306"/>
    </location>
</feature>
<feature type="sequence variant" id="VAR_005795" description="In VWD2; dbSNP:rs61749387." evidence="12 18 22 28">
    <original>R</original>
    <variation>C</variation>
    <location>
        <position position="1308"/>
    </location>
</feature>
<feature type="sequence variant" id="VAR_005796" description="In VWD2; dbSNP:rs61749392." evidence="29">
    <original>W</original>
    <variation>C</variation>
    <location>
        <position position="1313"/>
    </location>
</feature>
<feature type="sequence variant" id="VAR_005797" description="In VWD2; dbSNP:rs61749393." evidence="12">
    <original>V</original>
    <variation>L</variation>
    <location>
        <position position="1314"/>
    </location>
</feature>
<feature type="sequence variant" id="VAR_005798" description="In VWD2; dbSNP:rs61749397." evidence="14 18 21">
    <original>V</original>
    <variation>M</variation>
    <location>
        <position position="1316"/>
    </location>
</feature>
<feature type="sequence variant" id="VAR_005799" description="In VWD2; dbSNP:rs372028373." evidence="12">
    <original>V</original>
    <variation>L</variation>
    <location>
        <position position="1318"/>
    </location>
</feature>
<feature type="sequence variant" id="VAR_005800" description="In VWD2; dbSNP:rs61749398." evidence="11">
    <original>G</original>
    <variation>S</variation>
    <location>
        <position position="1324"/>
    </location>
</feature>
<feature type="sequence variant" id="VAR_005801" description="In VWD2; dbSNP:rs61749403." evidence="18">
    <original>R</original>
    <variation>Q</variation>
    <location>
        <position position="1341"/>
    </location>
</feature>
<feature type="sequence variant" id="VAR_005802" description="In VWD2; dbSNP:rs61750071." evidence="40">
    <original>R</original>
    <variation>C</variation>
    <location>
        <position position="1374"/>
    </location>
</feature>
<feature type="sequence variant" id="VAR_005803" description="In VWD2; dbSNP:rs61750072." evidence="40 41">
    <original>R</original>
    <variation>H</variation>
    <location>
        <position position="1374"/>
    </location>
</feature>
<feature type="sequence variant" id="VAR_005804" description="In dbSNP:rs216311." evidence="27 31 33 34 35 36 39 56">
    <original>T</original>
    <variation>A</variation>
    <location>
        <position position="1381"/>
    </location>
</feature>
<feature type="sequence variant" id="VAR_005805" description="In dbSNP:rs1800382." evidence="18">
    <original>R</original>
    <variation>H</variation>
    <location>
        <position position="1399"/>
    </location>
</feature>
<feature type="sequence variant" id="VAR_005806" description="In VWD2; dbSNP:rs61750088." evidence="46">
    <original>L</original>
    <variation>V</variation>
    <location>
        <position position="1460"/>
    </location>
</feature>
<feature type="sequence variant" id="VAR_005807" description="In VWD2; dbSNP:rs61750089." evidence="53">
    <original>A</original>
    <variation>V</variation>
    <location>
        <position position="1461"/>
    </location>
</feature>
<feature type="sequence variant" id="VAR_029656" description="In dbSNP:rs1800383." evidence="27 31 36">
    <original>D</original>
    <variation>H</variation>
    <location>
        <position position="1472"/>
    </location>
</feature>
<feature type="sequence variant" id="VAR_005808" description="In VWD2; dbSNP:rs61750101." evidence="51">
    <original>F</original>
    <variation>C</variation>
    <location>
        <position position="1514"/>
    </location>
</feature>
<feature type="sequence variant" id="VAR_005809" description="In VWD2; dbSNP:rs267607342." evidence="47">
    <original>L</original>
    <variation>P</variation>
    <location>
        <position position="1540"/>
    </location>
</feature>
<feature type="sequence variant" id="VAR_014630" description="In dbSNP:rs1800385.">
    <original>V</original>
    <variation>L</variation>
    <location>
        <position position="1565"/>
    </location>
</feature>
<feature type="sequence variant" id="VAR_036276" description="In a breast cancer sample; somatic mutation." evidence="20">
    <original>Y</original>
    <variation>C</variation>
    <location>
        <position position="1570"/>
    </location>
</feature>
<feature type="sequence variant" id="VAR_005810" description="Exhibits increased in susceptibility to proteolysis by ADAMTS13; dbSNP:rs1800386." evidence="17 49">
    <original>Y</original>
    <variation>C</variation>
    <location>
        <position position="1584"/>
    </location>
</feature>
<feature type="sequence variant" id="VAR_005811" description="In VWD2; dbSNP:rs61750117." evidence="49">
    <original>R</original>
    <variation>G</variation>
    <location>
        <position position="1597"/>
    </location>
</feature>
<feature type="sequence variant" id="VAR_005812" description="In VWD2; dbSNP:rs61750577." evidence="48">
    <original>R</original>
    <variation>Q</variation>
    <location>
        <position position="1597"/>
    </location>
</feature>
<feature type="sequence variant" id="VAR_005813" description="In VWD2; dbSNP:rs61750117." evidence="32">
    <original>R</original>
    <variation>W</variation>
    <location>
        <position position="1597"/>
    </location>
</feature>
<feature type="sequence variant" id="VAR_005814" description="In VWD2; dbSNP:rs61750579." evidence="32">
    <original>V</original>
    <variation>D</variation>
    <location>
        <position position="1607"/>
    </location>
</feature>
<feature type="sequence variant" id="VAR_005815" description="In VWD2; dbSNP:rs61750580." evidence="48 49">
    <original>G</original>
    <variation>R</variation>
    <location>
        <position position="1609"/>
    </location>
</feature>
<feature type="sequence variant" id="VAR_005816" description="In VWD2; dbSNP:rs61750581." evidence="28">
    <original>S</original>
    <variation>P</variation>
    <location>
        <position position="1613"/>
    </location>
</feature>
<feature type="sequence variant" id="VAR_005817" description="In VWD2; dbSNP:rs61750584." evidence="14 19 47">
    <original>I</original>
    <variation>T</variation>
    <location>
        <position position="1628"/>
    </location>
</feature>
<feature type="sequence variant" id="VAR_005818" description="In VWD2; dbSNP:rs61750588." evidence="15">
    <original>E</original>
    <variation>K</variation>
    <location>
        <position position="1638"/>
    </location>
</feature>
<feature type="sequence variant" id="VAR_005819" description="In VWD2; dbSNP:rs61750590." evidence="14">
    <original>P</original>
    <variation>S</variation>
    <location>
        <position position="1648"/>
    </location>
</feature>
<feature type="sequence variant" id="VAR_005820" description="In VWD2; dbSNP:rs61750596." evidence="48">
    <original>V</original>
    <variation>E</variation>
    <location>
        <position position="1665"/>
    </location>
</feature>
<feature type="sequence variant" id="VAR_009142" description="In VWD3; likely benign; dbSNP:rs61750615.">
    <original>P</original>
    <variation>S</variation>
    <location>
        <position position="2063"/>
    </location>
</feature>
<feature type="sequence variant" id="VAR_057026" description="In dbSNP:rs34230288.">
    <original>A</original>
    <variation>S</variation>
    <location>
        <position position="2178"/>
    </location>
</feature>
<feature type="sequence variant" id="VAR_057027" description="In dbSNP:rs2229446.">
    <original>R</original>
    <variation>Q</variation>
    <location>
        <position position="2185"/>
    </location>
</feature>
<feature type="sequence variant" id="VAR_009143" description="In VWD3; dbSNP:rs61750630.">
    <original>C</original>
    <variation>F</variation>
    <location>
        <position position="2362"/>
    </location>
</feature>
<feature type="sequence variant" id="VAR_009144" description="In VWD3; dbSNP:rs61751298.">
    <original>N</original>
    <variation>Y</variation>
    <location>
        <position position="2546"/>
    </location>
</feature>
<feature type="sequence variant" id="VAR_057028" description="In dbSNP:rs7962217.">
    <original>G</original>
    <variation>R</variation>
    <location>
        <position position="2705"/>
    </location>
</feature>
<feature type="sequence variant" id="VAR_005821" description="In VWD3; dbSNP:rs61751305." evidence="45">
    <original>C</original>
    <variation>Y</variation>
    <location>
        <position position="2739"/>
    </location>
</feature>
<feature type="sequence variant" id="VAR_005822" description="In VWD2; dbSNP:rs61751310." evidence="54">
    <original>C</original>
    <variation>R</variation>
    <location>
        <position position="2773"/>
    </location>
</feature>
<feature type="mutagenesis site" description="Reduced secretion and increased intracellular retention. Similar phenotype; when associated with S-1169." evidence="9">
    <original>C</original>
    <variation>R</variation>
    <location>
        <position position="1149"/>
    </location>
</feature>
<feature type="mutagenesis site" description="Reduced secretion and increased intracellular retention. Similar phenotype; when associated with R-1149." evidence="9">
    <original>C</original>
    <variation>S</variation>
    <location>
        <position position="1169"/>
    </location>
</feature>
<feature type="sequence conflict" description="In Ref. 11; AAB59512." evidence="58" ref="11">
    <original>P</original>
    <variation>H</variation>
    <location>
        <position position="770"/>
    </location>
</feature>
<feature type="sequence conflict" description="In Ref. 10; AA sequence and 11; AAB59512." evidence="58" ref="10 11">
    <original>C</original>
    <variation>S</variation>
    <location>
        <position position="804"/>
    </location>
</feature>
<feature type="sequence conflict" description="In Ref. 1; CAA27972." evidence="58" ref="1">
    <original>S</original>
    <variation>T</variation>
    <location>
        <position position="1914"/>
    </location>
</feature>
<feature type="sequence conflict" description="In Ref. 10; AA sequence." evidence="58" ref="10">
    <original>C</original>
    <variation>S</variation>
    <location>
        <position position="2168"/>
    </location>
</feature>
<feature type="turn" evidence="74">
    <location>
        <begin position="39"/>
        <end position="41"/>
    </location>
</feature>
<feature type="strand" evidence="74">
    <location>
        <begin position="42"/>
        <end position="44"/>
    </location>
</feature>
<feature type="strand" evidence="74">
    <location>
        <begin position="50"/>
        <end position="52"/>
    </location>
</feature>
<feature type="strand" evidence="74">
    <location>
        <begin position="59"/>
        <end position="62"/>
    </location>
</feature>
<feature type="strand" evidence="74">
    <location>
        <begin position="64"/>
        <end position="67"/>
    </location>
</feature>
<feature type="strand" evidence="74">
    <location>
        <begin position="69"/>
        <end position="77"/>
    </location>
</feature>
<feature type="strand" evidence="74">
    <location>
        <begin position="80"/>
        <end position="88"/>
    </location>
</feature>
<feature type="turn" evidence="74">
    <location>
        <begin position="89"/>
        <end position="91"/>
    </location>
</feature>
<feature type="strand" evidence="74">
    <location>
        <begin position="92"/>
        <end position="95"/>
    </location>
</feature>
<feature type="strand" evidence="74">
    <location>
        <begin position="98"/>
        <end position="100"/>
    </location>
</feature>
<feature type="strand" evidence="74">
    <location>
        <begin position="103"/>
        <end position="108"/>
    </location>
</feature>
<feature type="strand" evidence="74">
    <location>
        <begin position="119"/>
        <end position="131"/>
    </location>
</feature>
<feature type="turn" evidence="74">
    <location>
        <begin position="132"/>
        <end position="135"/>
    </location>
</feature>
<feature type="strand" evidence="74">
    <location>
        <begin position="136"/>
        <end position="140"/>
    </location>
</feature>
<feature type="helix" evidence="74">
    <location>
        <begin position="152"/>
        <end position="154"/>
    </location>
</feature>
<feature type="turn" evidence="74">
    <location>
        <begin position="155"/>
        <end position="157"/>
    </location>
</feature>
<feature type="helix" evidence="74">
    <location>
        <begin position="184"/>
        <end position="189"/>
    </location>
</feature>
<feature type="helix" evidence="74">
    <location>
        <begin position="224"/>
        <end position="229"/>
    </location>
</feature>
<feature type="helix" evidence="74">
    <location>
        <begin position="232"/>
        <end position="235"/>
    </location>
</feature>
<feature type="turn" evidence="74">
    <location>
        <begin position="236"/>
        <end position="239"/>
    </location>
</feature>
<feature type="helix" evidence="74">
    <location>
        <begin position="244"/>
        <end position="256"/>
    </location>
</feature>
<feature type="helix" evidence="74">
    <location>
        <begin position="265"/>
        <end position="278"/>
    </location>
</feature>
<feature type="strand" evidence="74">
    <location>
        <begin position="287"/>
        <end position="289"/>
    </location>
</feature>
<feature type="strand" evidence="74">
    <location>
        <begin position="296"/>
        <end position="298"/>
    </location>
</feature>
<feature type="strand" evidence="74">
    <location>
        <begin position="302"/>
        <end position="305"/>
    </location>
</feature>
<feature type="strand" evidence="74">
    <location>
        <begin position="311"/>
        <end position="313"/>
    </location>
</feature>
<feature type="strand" evidence="74">
    <location>
        <begin position="326"/>
        <end position="328"/>
    </location>
</feature>
<feature type="strand" evidence="74">
    <location>
        <begin position="333"/>
        <end position="337"/>
    </location>
</feature>
<feature type="strand" evidence="74">
    <location>
        <begin position="339"/>
        <end position="344"/>
    </location>
</feature>
<feature type="helix" evidence="74">
    <location>
        <begin position="345"/>
        <end position="347"/>
    </location>
</feature>
<feature type="strand" evidence="74">
    <location>
        <begin position="350"/>
        <end position="352"/>
    </location>
</feature>
<feature type="strand" evidence="74">
    <location>
        <begin position="355"/>
        <end position="357"/>
    </location>
</feature>
<feature type="turn" evidence="74">
    <location>
        <begin position="392"/>
        <end position="394"/>
    </location>
</feature>
<feature type="strand" evidence="74">
    <location>
        <begin position="410"/>
        <end position="413"/>
    </location>
</feature>
<feature type="strand" evidence="74">
    <location>
        <begin position="426"/>
        <end position="431"/>
    </location>
</feature>
<feature type="strand" evidence="74">
    <location>
        <begin position="439"/>
        <end position="444"/>
    </location>
</feature>
<feature type="strand" evidence="74">
    <location>
        <begin position="449"/>
        <end position="451"/>
    </location>
</feature>
<feature type="strand" evidence="74">
    <location>
        <begin position="486"/>
        <end position="488"/>
    </location>
</feature>
<feature type="strand" evidence="74">
    <location>
        <begin position="495"/>
        <end position="497"/>
    </location>
</feature>
<feature type="strand" evidence="74">
    <location>
        <begin position="504"/>
        <end position="506"/>
    </location>
</feature>
<feature type="helix" evidence="74">
    <location>
        <begin position="514"/>
        <end position="516"/>
    </location>
</feature>
<feature type="helix" evidence="74">
    <location>
        <begin position="532"/>
        <end position="535"/>
    </location>
</feature>
<feature type="helix" evidence="74">
    <location>
        <begin position="546"/>
        <end position="552"/>
    </location>
</feature>
<feature type="strand" evidence="74">
    <location>
        <begin position="554"/>
        <end position="556"/>
    </location>
</feature>
<feature type="helix" evidence="74">
    <location>
        <begin position="569"/>
        <end position="572"/>
    </location>
</feature>
<feature type="helix" evidence="74">
    <location>
        <begin position="574"/>
        <end position="576"/>
    </location>
</feature>
<feature type="helix" evidence="74">
    <location>
        <begin position="577"/>
        <end position="584"/>
    </location>
</feature>
<feature type="helix" evidence="74">
    <location>
        <begin position="585"/>
        <end position="588"/>
    </location>
</feature>
<feature type="helix" evidence="74">
    <location>
        <begin position="590"/>
        <end position="592"/>
    </location>
</feature>
<feature type="helix" evidence="74">
    <location>
        <begin position="593"/>
        <end position="596"/>
    </location>
</feature>
<feature type="helix" evidence="74">
    <location>
        <begin position="602"/>
        <end position="614"/>
    </location>
</feature>
<feature type="strand" evidence="74">
    <location>
        <begin position="615"/>
        <end position="617"/>
    </location>
</feature>
<feature type="helix" evidence="74">
    <location>
        <begin position="618"/>
        <end position="636"/>
    </location>
</feature>
<feature type="turn" evidence="74">
    <location>
        <begin position="645"/>
        <end position="647"/>
    </location>
</feature>
<feature type="strand" evidence="74">
    <location>
        <begin position="665"/>
        <end position="667"/>
    </location>
</feature>
<feature type="helix" evidence="74">
    <location>
        <begin position="669"/>
        <end position="673"/>
    </location>
</feature>
<feature type="strand" evidence="74">
    <location>
        <begin position="697"/>
        <end position="699"/>
    </location>
</feature>
<feature type="strand" evidence="74">
    <location>
        <begin position="722"/>
        <end position="724"/>
    </location>
</feature>
<feature type="strand" evidence="74">
    <location>
        <begin position="727"/>
        <end position="732"/>
    </location>
</feature>
<feature type="strand" evidence="74">
    <location>
        <begin position="735"/>
        <end position="739"/>
    </location>
</feature>
<feature type="strand" evidence="74">
    <location>
        <begin position="769"/>
        <end position="771"/>
    </location>
</feature>
<feature type="strand" evidence="71">
    <location>
        <begin position="772"/>
        <end position="774"/>
    </location>
</feature>
<feature type="strand" evidence="72">
    <location>
        <begin position="778"/>
        <end position="781"/>
    </location>
</feature>
<feature type="helix" evidence="71">
    <location>
        <begin position="786"/>
        <end position="788"/>
    </location>
</feature>
<feature type="strand" evidence="71">
    <location>
        <begin position="792"/>
        <end position="794"/>
    </location>
</feature>
<feature type="strand" evidence="74">
    <location>
        <begin position="795"/>
        <end position="797"/>
    </location>
</feature>
<feature type="strand" evidence="71">
    <location>
        <begin position="807"/>
        <end position="809"/>
    </location>
</feature>
<feature type="strand" evidence="71">
    <location>
        <begin position="814"/>
        <end position="816"/>
    </location>
</feature>
<feature type="strand" evidence="71">
    <location>
        <begin position="818"/>
        <end position="823"/>
    </location>
</feature>
<feature type="helix" evidence="71">
    <location>
        <begin position="824"/>
        <end position="826"/>
    </location>
</feature>
<feature type="strand" evidence="71">
    <location>
        <begin position="829"/>
        <end position="831"/>
    </location>
</feature>
<feature type="strand" evidence="71">
    <location>
        <begin position="834"/>
        <end position="836"/>
    </location>
</feature>
<feature type="strand" evidence="71">
    <location>
        <begin position="841"/>
        <end position="844"/>
    </location>
</feature>
<feature type="strand" evidence="71">
    <location>
        <begin position="847"/>
        <end position="852"/>
    </location>
</feature>
<feature type="strand" evidence="71">
    <location>
        <begin position="855"/>
        <end position="858"/>
    </location>
</feature>
<feature type="strand" evidence="71">
    <location>
        <begin position="865"/>
        <end position="870"/>
    </location>
</feature>
<feature type="turn" evidence="71">
    <location>
        <begin position="871"/>
        <end position="873"/>
    </location>
</feature>
<feature type="strand" evidence="71">
    <location>
        <begin position="874"/>
        <end position="876"/>
    </location>
</feature>
<feature type="strand" evidence="71">
    <location>
        <begin position="882"/>
        <end position="884"/>
    </location>
</feature>
<feature type="strand" evidence="71">
    <location>
        <begin position="889"/>
        <end position="896"/>
    </location>
</feature>
<feature type="strand" evidence="71">
    <location>
        <begin position="898"/>
        <end position="900"/>
    </location>
</feature>
<feature type="strand" evidence="71">
    <location>
        <begin position="905"/>
        <end position="913"/>
    </location>
</feature>
<feature type="strand" evidence="72">
    <location>
        <begin position="915"/>
        <end position="917"/>
    </location>
</feature>
<feature type="helix" evidence="72">
    <location>
        <begin position="918"/>
        <end position="920"/>
    </location>
</feature>
<feature type="strand" evidence="71">
    <location>
        <begin position="922"/>
        <end position="929"/>
    </location>
</feature>
<feature type="strand" evidence="71">
    <location>
        <begin position="932"/>
        <end position="937"/>
    </location>
</feature>
<feature type="strand" evidence="71">
    <location>
        <begin position="940"/>
        <end position="945"/>
    </location>
</feature>
<feature type="strand" evidence="71">
    <location>
        <begin position="953"/>
        <end position="958"/>
    </location>
</feature>
<feature type="strand" evidence="71">
    <location>
        <begin position="961"/>
        <end position="974"/>
    </location>
</feature>
<feature type="strand" evidence="71">
    <location>
        <begin position="976"/>
        <end position="978"/>
    </location>
</feature>
<feature type="strand" evidence="71">
    <location>
        <begin position="980"/>
        <end position="984"/>
    </location>
</feature>
<feature type="helix" evidence="71">
    <location>
        <begin position="986"/>
        <end position="988"/>
    </location>
</feature>
<feature type="turn" evidence="72">
    <location>
        <begin position="989"/>
        <end position="991"/>
    </location>
</feature>
<feature type="helix" evidence="71">
    <location>
        <begin position="1003"/>
        <end position="1005"/>
    </location>
</feature>
<feature type="helix" evidence="71">
    <location>
        <begin position="1018"/>
        <end position="1023"/>
    </location>
</feature>
<feature type="strand" evidence="72">
    <location>
        <begin position="1029"/>
        <end position="1031"/>
    </location>
</feature>
<feature type="helix" evidence="71">
    <location>
        <begin position="1044"/>
        <end position="1046"/>
    </location>
</feature>
<feature type="helix" evidence="71">
    <location>
        <begin position="1050"/>
        <end position="1060"/>
    </location>
</feature>
<feature type="helix" evidence="71">
    <location>
        <begin position="1061"/>
        <end position="1064"/>
    </location>
</feature>
<feature type="helix" evidence="71">
    <location>
        <begin position="1066"/>
        <end position="1074"/>
    </location>
</feature>
<feature type="helix" evidence="71">
    <location>
        <begin position="1078"/>
        <end position="1088"/>
    </location>
</feature>
<feature type="strand" evidence="74">
    <location>
        <begin position="1089"/>
        <end position="1091"/>
    </location>
</feature>
<feature type="strand" evidence="71">
    <location>
        <begin position="1094"/>
        <end position="1096"/>
    </location>
</feature>
<feature type="helix" evidence="71">
    <location>
        <begin position="1098"/>
        <end position="1113"/>
    </location>
</feature>
<feature type="strand" evidence="71">
    <location>
        <begin position="1123"/>
        <end position="1126"/>
    </location>
</feature>
<feature type="turn" evidence="72">
    <location>
        <begin position="1131"/>
        <end position="1133"/>
    </location>
</feature>
<feature type="helix" evidence="71">
    <location>
        <begin position="1136"/>
        <end position="1138"/>
    </location>
</feature>
<feature type="strand" evidence="71">
    <location>
        <begin position="1143"/>
        <end position="1153"/>
    </location>
</feature>
<feature type="strand" evidence="72">
    <location>
        <begin position="1156"/>
        <end position="1158"/>
    </location>
</feature>
<feature type="strand" evidence="71">
    <location>
        <begin position="1166"/>
        <end position="1176"/>
    </location>
</feature>
<feature type="strand" evidence="74">
    <location>
        <begin position="1179"/>
        <end position="1181"/>
    </location>
</feature>
<feature type="strand" evidence="71">
    <location>
        <begin position="1182"/>
        <end position="1184"/>
    </location>
</feature>
<feature type="turn" evidence="71">
    <location>
        <begin position="1185"/>
        <end position="1188"/>
    </location>
</feature>
<feature type="strand" evidence="71">
    <location>
        <begin position="1189"/>
        <end position="1191"/>
    </location>
</feature>
<feature type="helix" evidence="71">
    <location>
        <begin position="1193"/>
        <end position="1195"/>
    </location>
</feature>
<feature type="strand" evidence="71">
    <location>
        <begin position="1198"/>
        <end position="1201"/>
    </location>
</feature>
<feature type="strand" evidence="71">
    <location>
        <begin position="1204"/>
        <end position="1207"/>
    </location>
</feature>
<feature type="strand" evidence="71">
    <location>
        <begin position="1211"/>
        <end position="1215"/>
    </location>
</feature>
<feature type="turn" evidence="71">
    <location>
        <begin position="1219"/>
        <end position="1221"/>
    </location>
</feature>
<feature type="strand" evidence="71">
    <location>
        <begin position="1223"/>
        <end position="1230"/>
    </location>
</feature>
<feature type="strand" evidence="71">
    <location>
        <begin position="1232"/>
        <end position="1236"/>
    </location>
</feature>
<feature type="strand" evidence="69">
    <location>
        <begin position="1267"/>
        <end position="1269"/>
    </location>
</feature>
<feature type="turn" evidence="65">
    <location>
        <begin position="1270"/>
        <end position="1273"/>
    </location>
</feature>
<feature type="strand" evidence="69">
    <location>
        <begin position="1276"/>
        <end position="1283"/>
    </location>
</feature>
<feature type="strand" evidence="66">
    <location>
        <begin position="1285"/>
        <end position="1288"/>
    </location>
</feature>
<feature type="helix" evidence="69">
    <location>
        <begin position="1290"/>
        <end position="1305"/>
    </location>
</feature>
<feature type="turn" evidence="60">
    <location>
        <begin position="1307"/>
        <end position="1310"/>
    </location>
</feature>
<feature type="strand" evidence="69">
    <location>
        <begin position="1313"/>
        <end position="1329"/>
    </location>
</feature>
<feature type="helix" evidence="69">
    <location>
        <begin position="1337"/>
        <end position="1345"/>
    </location>
</feature>
<feature type="helix" evidence="69">
    <location>
        <begin position="1357"/>
        <end position="1366"/>
    </location>
</feature>
<feature type="strand" evidence="69">
    <location>
        <begin position="1369"/>
        <end position="1371"/>
    </location>
</feature>
<feature type="strand" evidence="69">
    <location>
        <begin position="1377"/>
        <end position="1385"/>
    </location>
</feature>
<feature type="helix" evidence="69">
    <location>
        <begin position="1391"/>
        <end position="1393"/>
    </location>
</feature>
<feature type="helix" evidence="61">
    <location>
        <begin position="1394"/>
        <end position="1396"/>
    </location>
</feature>
<feature type="helix" evidence="69">
    <location>
        <begin position="1397"/>
        <end position="1406"/>
    </location>
</feature>
<feature type="strand" evidence="69">
    <location>
        <begin position="1409"/>
        <end position="1417"/>
    </location>
</feature>
<feature type="helix" evidence="69">
    <location>
        <begin position="1422"/>
        <end position="1431"/>
    </location>
</feature>
<feature type="helix" evidence="65">
    <location>
        <begin position="1433"/>
        <end position="1435"/>
    </location>
</feature>
<feature type="strand" evidence="69">
    <location>
        <begin position="1438"/>
        <end position="1442"/>
    </location>
</feature>
<feature type="helix" evidence="69">
    <location>
        <begin position="1443"/>
        <end position="1445"/>
    </location>
</feature>
<feature type="helix" evidence="69">
    <location>
        <begin position="1446"/>
        <end position="1460"/>
    </location>
</feature>
<feature type="strand" evidence="64">
    <location>
        <begin position="1498"/>
        <end position="1504"/>
    </location>
</feature>
<feature type="turn" evidence="64">
    <location>
        <begin position="1507"/>
        <end position="1509"/>
    </location>
</feature>
<feature type="helix" evidence="64">
    <location>
        <begin position="1511"/>
        <end position="1527"/>
    </location>
</feature>
<feature type="strand" evidence="64">
    <location>
        <begin position="1534"/>
        <end position="1550"/>
    </location>
</feature>
<feature type="helix" evidence="64">
    <location>
        <begin position="1558"/>
        <end position="1567"/>
    </location>
</feature>
<feature type="helix" evidence="64">
    <location>
        <begin position="1578"/>
        <end position="1587"/>
    </location>
</feature>
<feature type="turn" evidence="64">
    <location>
        <begin position="1588"/>
        <end position="1590"/>
    </location>
</feature>
<feature type="helix" evidence="64">
    <location>
        <begin position="1592"/>
        <end position="1594"/>
    </location>
</feature>
<feature type="helix" evidence="63">
    <location>
        <begin position="1595"/>
        <end position="1599"/>
    </location>
</feature>
<feature type="strand" evidence="64">
    <location>
        <begin position="1602"/>
        <end position="1608"/>
    </location>
</feature>
<feature type="strand" evidence="64">
    <location>
        <begin position="1623"/>
        <end position="1631"/>
    </location>
</feature>
<feature type="helix" evidence="64">
    <location>
        <begin position="1636"/>
        <end position="1643"/>
    </location>
</feature>
<feature type="strand" evidence="64">
    <location>
        <begin position="1649"/>
        <end position="1652"/>
    </location>
</feature>
<feature type="turn" evidence="64">
    <location>
        <begin position="1654"/>
        <end position="1656"/>
    </location>
</feature>
<feature type="helix" evidence="64">
    <location>
        <begin position="1657"/>
        <end position="1670"/>
    </location>
</feature>
<feature type="strand" evidence="59">
    <location>
        <begin position="1690"/>
        <end position="1697"/>
    </location>
</feature>
<feature type="strand" evidence="59">
    <location>
        <begin position="1699"/>
        <end position="1702"/>
    </location>
</feature>
<feature type="helix" evidence="59">
    <location>
        <begin position="1704"/>
        <end position="1720"/>
    </location>
</feature>
<feature type="strand" evidence="59">
    <location>
        <begin position="1727"/>
        <end position="1743"/>
    </location>
</feature>
<feature type="strand" evidence="67">
    <location>
        <begin position="1745"/>
        <end position="1747"/>
    </location>
</feature>
<feature type="helix" evidence="59">
    <location>
        <begin position="1751"/>
        <end position="1759"/>
    </location>
</feature>
<feature type="helix" evidence="59">
    <location>
        <begin position="1770"/>
        <end position="1782"/>
    </location>
</feature>
<feature type="helix" evidence="62">
    <location>
        <begin position="1784"/>
        <end position="1786"/>
    </location>
</feature>
<feature type="strand" evidence="59">
    <location>
        <begin position="1792"/>
        <end position="1800"/>
    </location>
</feature>
<feature type="helix" evidence="59">
    <location>
        <begin position="1809"/>
        <end position="1817"/>
    </location>
</feature>
<feature type="strand" evidence="59">
    <location>
        <begin position="1820"/>
        <end position="1831"/>
    </location>
</feature>
<feature type="helix" evidence="59">
    <location>
        <begin position="1833"/>
        <end position="1839"/>
    </location>
</feature>
<feature type="helix" evidence="59">
    <location>
        <begin position="1841"/>
        <end position="1847"/>
    </location>
</feature>
<feature type="strand" evidence="59">
    <location>
        <begin position="1849"/>
        <end position="1853"/>
    </location>
</feature>
<feature type="helix" evidence="59">
    <location>
        <begin position="1856"/>
        <end position="1862"/>
    </location>
</feature>
<feature type="strand" evidence="62">
    <location>
        <begin position="1863"/>
        <end position="1865"/>
    </location>
</feature>
<feature type="helix" evidence="59">
    <location>
        <begin position="1866"/>
        <end position="1870"/>
    </location>
</feature>
<feature type="strand" evidence="70">
    <location>
        <begin position="2497"/>
        <end position="2503"/>
    </location>
</feature>
<feature type="turn" evidence="70">
    <location>
        <begin position="2506"/>
        <end position="2508"/>
    </location>
</feature>
<feature type="strand" evidence="70">
    <location>
        <begin position="2511"/>
        <end position="2516"/>
    </location>
</feature>
<feature type="strand" evidence="70">
    <location>
        <begin position="2520"/>
        <end position="2522"/>
    </location>
</feature>
<feature type="strand" evidence="70">
    <location>
        <begin position="2524"/>
        <end position="2527"/>
    </location>
</feature>
<feature type="strand" evidence="70">
    <location>
        <begin position="2529"/>
        <end position="2536"/>
    </location>
</feature>
<feature type="strand" evidence="70">
    <location>
        <begin position="2539"/>
        <end position="2546"/>
    </location>
</feature>
<feature type="strand" evidence="70">
    <location>
        <begin position="2562"/>
        <end position="2565"/>
    </location>
</feature>
<feature type="strand" evidence="70">
    <location>
        <begin position="2568"/>
        <end position="2571"/>
    </location>
</feature>
<feature type="strand" evidence="70">
    <location>
        <begin position="2574"/>
        <end position="2577"/>
    </location>
</feature>
<feature type="strand" evidence="73">
    <location>
        <begin position="2648"/>
        <end position="2653"/>
    </location>
</feature>
<feature type="turn" evidence="73">
    <location>
        <begin position="2654"/>
        <end position="2656"/>
    </location>
</feature>
<feature type="strand" evidence="73">
    <location>
        <begin position="2657"/>
        <end position="2661"/>
    </location>
</feature>
<feature type="strand" evidence="73">
    <location>
        <begin position="2669"/>
        <end position="2678"/>
    </location>
</feature>
<feature type="strand" evidence="73">
    <location>
        <begin position="2684"/>
        <end position="2689"/>
    </location>
</feature>
<feature type="strand" evidence="73">
    <location>
        <begin position="2698"/>
        <end position="2702"/>
    </location>
</feature>
<feature type="strand" evidence="73">
    <location>
        <begin position="2708"/>
        <end position="2710"/>
    </location>
</feature>
<feature type="strand" evidence="73">
    <location>
        <begin position="2717"/>
        <end position="2719"/>
    </location>
</feature>
<feature type="strand" evidence="68">
    <location>
        <begin position="2728"/>
        <end position="2732"/>
    </location>
</feature>
<feature type="strand" evidence="68">
    <location>
        <begin position="2739"/>
        <end position="2743"/>
    </location>
</feature>
<feature type="strand" evidence="68">
    <location>
        <begin position="2745"/>
        <end position="2749"/>
    </location>
</feature>
<feature type="strand" evidence="68">
    <location>
        <begin position="2756"/>
        <end position="2761"/>
    </location>
</feature>
<feature type="turn" evidence="68">
    <location>
        <begin position="2762"/>
        <end position="2765"/>
    </location>
</feature>
<feature type="strand" evidence="68">
    <location>
        <begin position="2766"/>
        <end position="2787"/>
    </location>
</feature>
<feature type="strand" evidence="68">
    <location>
        <begin position="2793"/>
        <end position="2801"/>
    </location>
</feature>
<feature type="strand" evidence="68">
    <location>
        <begin position="2804"/>
        <end position="2809"/>
    </location>
</feature>
<protein>
    <recommendedName>
        <fullName>von Willebrand factor</fullName>
        <shortName>vWF</shortName>
    </recommendedName>
    <component>
        <recommendedName>
            <fullName>von Willebrand antigen 2</fullName>
        </recommendedName>
        <alternativeName>
            <fullName>von Willebrand antigen II</fullName>
        </alternativeName>
    </component>
</protein>
<keyword id="KW-0002">3D-structure</keyword>
<keyword id="KW-0025">Alternative splicing</keyword>
<keyword id="KW-0094">Blood coagulation</keyword>
<keyword id="KW-0130">Cell adhesion</keyword>
<keyword id="KW-0165">Cleavage on pair of basic residues</keyword>
<keyword id="KW-0903">Direct protein sequencing</keyword>
<keyword id="KW-0225">Disease variant</keyword>
<keyword id="KW-1015">Disulfide bond</keyword>
<keyword id="KW-0272">Extracellular matrix</keyword>
<keyword id="KW-0325">Glycoprotein</keyword>
<keyword id="KW-0356">Hemostasis</keyword>
<keyword id="KW-1267">Proteomics identification</keyword>
<keyword id="KW-1185">Reference proteome</keyword>
<keyword id="KW-0677">Repeat</keyword>
<keyword id="KW-0964">Secreted</keyword>
<keyword id="KW-0732">Signal</keyword>
<keyword id="KW-0852">von Willebrand disease</keyword>